<accession>P21675</accession>
<accession>A5CVC8</accession>
<accession>A5CVC9</accession>
<accession>A5CVD0</accession>
<accession>A5CVD1</accession>
<accession>B1Q2X3</accession>
<accession>Q59FZ3</accession>
<accession>Q6IUZ1</accession>
<accession>Q70Q86</accession>
<accession>Q70Q87</accession>
<accession>Q70T00</accession>
<accession>Q70T01</accession>
<accession>Q70T02</accession>
<accession>Q70T03</accession>
<gene>
    <name evidence="40" type="primary">TAF1</name>
    <name type="synonym">BA2R</name>
    <name type="synonym">CCG1</name>
    <name type="synonym">CCGS</name>
    <name type="synonym">TAF2A</name>
</gene>
<feature type="chain" id="PRO_0000211215" description="Transcription initiation factor TFIID subunit 1">
    <location>
        <begin position="1"/>
        <end position="1893"/>
    </location>
</feature>
<feature type="domain" description="Protein kinase 1">
    <location>
        <begin position="1"/>
        <end position="435"/>
    </location>
</feature>
<feature type="domain" description="Bromo 1" evidence="3">
    <location>
        <begin position="1397"/>
        <end position="1505"/>
    </location>
</feature>
<feature type="domain" description="Protein kinase 2">
    <location>
        <begin position="1446"/>
        <end position="1893"/>
    </location>
</feature>
<feature type="domain" description="Bromo 2" evidence="3">
    <location>
        <begin position="1519"/>
        <end position="1628"/>
    </location>
</feature>
<feature type="DNA-binding region" description="HMG box; involved in promoter binding" evidence="44 45 46 47 48 49 50 51 52 53 54 55">
    <location>
        <begin position="1216"/>
        <end position="1294"/>
    </location>
</feature>
<feature type="region of interest" description="Disordered" evidence="4">
    <location>
        <begin position="155"/>
        <end position="184"/>
    </location>
</feature>
<feature type="region of interest" description="Disordered" evidence="4">
    <location>
        <begin position="197"/>
        <end position="224"/>
    </location>
</feature>
<feature type="region of interest" description="Disordered" evidence="4">
    <location>
        <begin position="534"/>
        <end position="557"/>
    </location>
</feature>
<feature type="region of interest" description="Histone acetyltransferase (HAT)">
    <location>
        <begin position="538"/>
        <end position="997"/>
    </location>
</feature>
<feature type="region of interest" description="Disordered" evidence="4">
    <location>
        <begin position="990"/>
        <end position="1009"/>
    </location>
</feature>
<feature type="region of interest" description="Disordered" evidence="4">
    <location>
        <begin position="1128"/>
        <end position="1148"/>
    </location>
</feature>
<feature type="region of interest" description="Disordered" evidence="4">
    <location>
        <begin position="1158"/>
        <end position="1177"/>
    </location>
</feature>
<feature type="region of interest" description="Disordered" evidence="4">
    <location>
        <begin position="1254"/>
        <end position="1278"/>
    </location>
</feature>
<feature type="region of interest" description="Interaction with ASF1A and ASF1B" evidence="9">
    <location>
        <begin position="1363"/>
        <end position="1650"/>
    </location>
</feature>
<feature type="region of interest" description="Disordered" evidence="4">
    <location>
        <begin position="1651"/>
        <end position="1676"/>
    </location>
</feature>
<feature type="region of interest" description="Disordered" evidence="4">
    <location>
        <begin position="1696"/>
        <end position="1893"/>
    </location>
</feature>
<feature type="short sequence motif" description="Nuclear localization signal" evidence="2">
    <location>
        <begin position="1372"/>
        <end position="1379"/>
    </location>
</feature>
<feature type="compositionally biased region" description="Pro residues" evidence="4">
    <location>
        <begin position="156"/>
        <end position="165"/>
    </location>
</feature>
<feature type="compositionally biased region" description="Low complexity" evidence="4">
    <location>
        <begin position="197"/>
        <end position="208"/>
    </location>
</feature>
<feature type="compositionally biased region" description="Basic and acidic residues" evidence="4">
    <location>
        <begin position="995"/>
        <end position="1004"/>
    </location>
</feature>
<feature type="compositionally biased region" description="Basic and acidic residues" evidence="4">
    <location>
        <begin position="1139"/>
        <end position="1148"/>
    </location>
</feature>
<feature type="compositionally biased region" description="Basic and acidic residues" evidence="4">
    <location>
        <begin position="1254"/>
        <end position="1270"/>
    </location>
</feature>
<feature type="compositionally biased region" description="Pro residues" evidence="4">
    <location>
        <begin position="1659"/>
        <end position="1668"/>
    </location>
</feature>
<feature type="compositionally biased region" description="Acidic residues" evidence="4">
    <location>
        <begin position="1709"/>
        <end position="1723"/>
    </location>
</feature>
<feature type="compositionally biased region" description="Acidic residues" evidence="4">
    <location>
        <begin position="1741"/>
        <end position="1756"/>
    </location>
</feature>
<feature type="compositionally biased region" description="Polar residues" evidence="4">
    <location>
        <begin position="1830"/>
        <end position="1840"/>
    </location>
</feature>
<feature type="compositionally biased region" description="Acidic residues" evidence="4">
    <location>
        <begin position="1846"/>
        <end position="1857"/>
    </location>
</feature>
<feature type="compositionally biased region" description="Polar residues" evidence="4">
    <location>
        <begin position="1860"/>
        <end position="1869"/>
    </location>
</feature>
<feature type="modified residue" description="Phosphoserine; by autocatalysis" evidence="28">
    <location>
        <position position="137"/>
    </location>
</feature>
<feature type="modified residue" description="Phosphoserine; by autocatalysis" evidence="28 75">
    <location>
        <position position="328"/>
    </location>
</feature>
<feature type="modified residue" description="N6-acetyllysine" evidence="1">
    <location>
        <position position="565"/>
    </location>
</feature>
<feature type="modified residue" description="Phosphoserine" evidence="1">
    <location>
        <position position="1690"/>
    </location>
</feature>
<feature type="modified residue" description="Phosphoserine" evidence="1">
    <location>
        <position position="1693"/>
    </location>
</feature>
<feature type="modified residue" description="Phosphoserine" evidence="1">
    <location>
        <position position="1799"/>
    </location>
</feature>
<feature type="modified residue" description="Phosphoserine" evidence="1">
    <location>
        <position position="1802"/>
    </location>
</feature>
<feature type="modified residue" description="Phosphoserine" evidence="1">
    <location>
        <position position="1820"/>
    </location>
</feature>
<feature type="modified residue" description="Phosphoserine" evidence="73">
    <location>
        <position position="1847"/>
    </location>
</feature>
<feature type="cross-link" description="Glycyl lysine isopeptide (Lys-Gly) (interchain with G-Cter in SUMO2)" evidence="76">
    <location>
        <position position="570"/>
    </location>
</feature>
<feature type="cross-link" description="Glycyl lysine isopeptide (Lys-Gly) (interchain with G-Cter in SUMO2)" evidence="76">
    <location>
        <position position="583"/>
    </location>
</feature>
<feature type="splice variant" id="VSP_061987" description="In isoform 13 and isoform 14.">
    <location>
        <begin position="1"/>
        <end position="20"/>
    </location>
</feature>
<feature type="splice variant" id="VSP_061988" description="In isoform 1 and isoform 13.">
    <location>
        <begin position="178"/>
        <end position="198"/>
    </location>
</feature>
<feature type="splice variant" id="VSP_061989" description="In isoform 2i." evidence="36">
    <original>SWPFHHPVNKKFVPDY</original>
    <variation>VSCLCAKYFLAISSPS</variation>
    <location>
        <begin position="1546"/>
        <end position="1561"/>
    </location>
</feature>
<feature type="splice variant" id="VSP_061990" description="In isoform 2h." evidence="36">
    <original>SWPF</original>
    <variation>IITK</variation>
    <location>
        <begin position="1546"/>
        <end position="1549"/>
    </location>
</feature>
<feature type="splice variant" id="VSP_061991" description="In isoform 2h." evidence="36">
    <location>
        <begin position="1550"/>
        <end position="1893"/>
    </location>
</feature>
<feature type="splice variant" id="VSP_061992" description="In isoform 2i." evidence="36">
    <location>
        <begin position="1562"/>
        <end position="1893"/>
    </location>
</feature>
<feature type="splice variant" id="VSP_061993" description="In isoform 2e." evidence="34 36">
    <original>PESQYTKT</original>
    <variation>YMCTTCRT</variation>
    <location>
        <begin position="1606"/>
        <end position="1613"/>
    </location>
</feature>
<feature type="splice variant" id="VSP_061994" description="In isoform 2e." evidence="34 36">
    <location>
        <begin position="1614"/>
        <end position="1893"/>
    </location>
</feature>
<feature type="splice variant" id="VSP_061995" description="In isoform N-TAF1, isoform 2d and isoform 2g." evidence="34 35 36">
    <original>Q</original>
    <variation>QAK</variation>
    <location>
        <position position="1666"/>
    </location>
</feature>
<feature type="splice variant" id="VSP_061996" description="In isoform 16." evidence="34">
    <original>VTQ</original>
    <variation>MRQGRGRLGEEDSDVDIEGYDDEEEDGKPKTPAP</variation>
    <location>
        <begin position="1706"/>
        <end position="1708"/>
    </location>
</feature>
<feature type="splice variant" id="VSP_061997" description="In isoform 4, isoform 2a and isoform 2g." evidence="34 36 37">
    <original>Q</original>
    <variation>QMRQGRGRLGEEDSDVDIEGYDDEEEDGKPKTPAP</variation>
    <location>
        <position position="1708"/>
    </location>
</feature>
<feature type="splice variant" id="VSP_061998" description="In isoform 2a, isoform 16, isoform 2c, isoform 2d and isoform 2g." evidence="34 36">
    <original>SYGSYEEPDPKSNTQDTSFSSIGGYEVSEEEEDEEEEEQRSGPSVLSQVHLSEDEEDSEDFHSIAGDSDLDSDE</original>
    <variation>RYQ</variation>
    <location>
        <begin position="1820"/>
        <end position="1893"/>
    </location>
</feature>
<feature type="splice variant" id="VSP_061999" description="In isoform 15.">
    <original>S</original>
    <variation>R</variation>
    <location>
        <position position="1820"/>
    </location>
</feature>
<feature type="splice variant" id="VSP_062000" description="In isoform 15.">
    <location>
        <begin position="1821"/>
        <end position="1893"/>
    </location>
</feature>
<feature type="sequence variant" id="VAR_020678" description="In dbSNP:rs28382158." evidence="15 33">
    <original>L</original>
    <variation>V</variation>
    <location>
        <position position="290"/>
    </location>
</feature>
<feature type="sequence variant" id="VAR_041930" description="In dbSNP:rs35317750." evidence="15">
    <original>A</original>
    <variation>G</variation>
    <location>
        <position position="318"/>
    </location>
</feature>
<feature type="sequence variant" id="VAR_041931" description="In a colorectal adenocarcinoma sample; somatic mutation." evidence="15">
    <original>G</original>
    <variation>D</variation>
    <location>
        <position position="474"/>
    </location>
</feature>
<feature type="sequence variant" id="VAR_077838" description="Found in a patient with X-linked intellectual disability; uncertain significance; dbSNP:rs200177996." evidence="21">
    <original>N</original>
    <variation>D</variation>
    <location>
        <position position="493"/>
    </location>
</feature>
<feature type="sequence variant" id="VAR_076394" description="In MRXS33; dbSNP:rs864321630." evidence="23">
    <original>P</original>
    <variation>S</variation>
    <location>
        <position position="596"/>
    </location>
</feature>
<feature type="sequence variant" id="VAR_041932" description="In a metastatic melanoma sample; somatic mutation." evidence="15">
    <original>E</original>
    <variation>K</variation>
    <location>
        <position position="672"/>
    </location>
</feature>
<feature type="sequence variant" id="VAR_041933" description="In a lung bronchoalveolar carcinoma sample; somatic mutation." evidence="15">
    <original>M</original>
    <variation>I</variation>
    <location>
        <position position="712"/>
    </location>
</feature>
<feature type="sequence variant" id="VAR_076395" description="In MRXS33; dbSNP:rs864321628." evidence="23">
    <original>C</original>
    <variation>R</variation>
    <location>
        <position position="807"/>
    </location>
</feature>
<feature type="sequence variant" id="VAR_076396" description="In MRXS33; dbSNP:rs864321631." evidence="23">
    <original>D</original>
    <variation>H</variation>
    <location>
        <position position="976"/>
    </location>
</feature>
<feature type="sequence variant" id="VAR_077839" description="Found in a patient with X-linked intellectual disability; uncertain significance; dbSNP:rs1569301036." evidence="21">
    <original>R</original>
    <variation>C</variation>
    <location>
        <position position="1190"/>
    </location>
</feature>
<feature type="sequence variant" id="VAR_076397" description="In MRXS33; dbSNP:rs864321629." evidence="23">
    <original>R</original>
    <variation>W</variation>
    <location>
        <position position="1246"/>
    </location>
</feature>
<feature type="sequence variant" id="VAR_076398" description="In MRXS33; dbSNP:rs864321627." evidence="23">
    <original>I</original>
    <variation>T</variation>
    <location>
        <position position="1337"/>
    </location>
</feature>
<feature type="sequence variant" id="VAR_048433" description="In dbSNP:rs7050748.">
    <original>V</original>
    <variation>I</variation>
    <location>
        <position position="1404"/>
    </location>
</feature>
<feature type="sequence variant" id="VAR_076399" description="In MRXS33; uncertain significance." evidence="23">
    <original>R</original>
    <variation>H</variation>
    <location>
        <position position="1452"/>
    </location>
</feature>
<feature type="sequence variant" id="VAR_076400" description="In MRXS33; uncertain significance." evidence="23">
    <original>N</original>
    <variation>H</variation>
    <location>
        <position position="1517"/>
    </location>
</feature>
<feature type="mutagenesis site" description="No decrease in kinase activity." evidence="31">
    <original>S</original>
    <variation>A</variation>
    <location>
        <position position="137"/>
    </location>
</feature>
<feature type="mutagenesis site" description="Reduces kinase activity; when associated with A-147; A-149; A-150; A-152 and A-154." evidence="31">
    <original>D</original>
    <variation>A</variation>
    <location>
        <position position="145"/>
    </location>
</feature>
<feature type="mutagenesis site" description="Reduces kinase activity; when associated with A-145; A-149; A-150; A-152 and A-154." evidence="31">
    <original>D</original>
    <variation>A</variation>
    <location>
        <position position="147"/>
    </location>
</feature>
<feature type="mutagenesis site" description="Reduces kinase activity; when associated with A-145; A-147; A-150; A-152 and A-154." evidence="31">
    <original>E</original>
    <variation>A</variation>
    <location>
        <position position="149"/>
    </location>
</feature>
<feature type="mutagenesis site" description="Reduces kinase activity; when associated with A-145; A-147; A-149; A-152 and A-154." evidence="31">
    <original>D</original>
    <variation>A</variation>
    <location>
        <position position="150"/>
    </location>
</feature>
<feature type="mutagenesis site" description="Reduces kinase activity; when associated with A-145; A-147; A-149; A-150 and A-154." evidence="31">
    <original>D</original>
    <variation>A</variation>
    <location>
        <position position="152"/>
    </location>
</feature>
<feature type="mutagenesis site" description="Reduces kinase activity; when associated with A-145; A-147; A-149; A-150 and A-152." evidence="31">
    <original>K</original>
    <variation>A</variation>
    <location>
        <position position="154"/>
    </location>
</feature>
<feature type="mutagenesis site" description="Reduces kinase activity; when associated with A-328; A-329; A-330 and A-331." evidence="31">
    <original>C</original>
    <variation>A</variation>
    <location>
        <position position="326"/>
    </location>
</feature>
<feature type="mutagenesis site" description="Reduces kinase activity; when associated with A-326; A-329; A-330 and A-331." evidence="31">
    <original>S</original>
    <variation>A</variation>
    <location>
        <position position="328"/>
    </location>
</feature>
<feature type="mutagenesis site" description="Reduces kinase activity; when associated with A-326; A-328; A-330 and A-331." evidence="31">
    <original>D</original>
    <variation>A</variation>
    <location>
        <position position="329"/>
    </location>
</feature>
<feature type="mutagenesis site" description="Reduces kinase activity; when associated with A-326; A-328; A-329 and A-331." evidence="31">
    <original>D</original>
    <variation>A</variation>
    <location>
        <position position="330"/>
    </location>
</feature>
<feature type="mutagenesis site" description="Reduces kinase activity; when associated with A-326; A-328; A-329 and A-330." evidence="31">
    <original>E</original>
    <variation>A</variation>
    <location>
        <position position="331"/>
    </location>
</feature>
<feature type="mutagenesis site" description="25% decrease in histone acetylation." evidence="12">
    <original>E</original>
    <variation>Q</variation>
    <location>
        <position position="742"/>
    </location>
</feature>
<feature type="mutagenesis site" description="Dramatic decrease in histone acetylation." evidence="12">
    <location>
        <begin position="848"/>
        <end position="850"/>
    </location>
</feature>
<feature type="strand" evidence="81">
    <location>
        <begin position="363"/>
        <end position="365"/>
    </location>
</feature>
<feature type="helix" evidence="81">
    <location>
        <begin position="368"/>
        <end position="374"/>
    </location>
</feature>
<feature type="helix" evidence="81">
    <location>
        <begin position="420"/>
        <end position="423"/>
    </location>
</feature>
<feature type="strand" evidence="81">
    <location>
        <begin position="427"/>
        <end position="429"/>
    </location>
</feature>
<feature type="helix" evidence="81">
    <location>
        <begin position="431"/>
        <end position="434"/>
    </location>
</feature>
<feature type="helix" evidence="81">
    <location>
        <begin position="494"/>
        <end position="498"/>
    </location>
</feature>
<feature type="helix" evidence="81">
    <location>
        <begin position="501"/>
        <end position="504"/>
    </location>
</feature>
<feature type="strand" evidence="81">
    <location>
        <begin position="509"/>
        <end position="511"/>
    </location>
</feature>
<feature type="strand" evidence="81">
    <location>
        <begin position="525"/>
        <end position="527"/>
    </location>
</feature>
<feature type="helix" evidence="81">
    <location>
        <begin position="591"/>
        <end position="594"/>
    </location>
</feature>
<feature type="helix" evidence="78">
    <location>
        <begin position="614"/>
        <end position="617"/>
    </location>
</feature>
<feature type="turn" evidence="78">
    <location>
        <begin position="621"/>
        <end position="623"/>
    </location>
</feature>
<feature type="helix" evidence="78">
    <location>
        <begin position="630"/>
        <end position="634"/>
    </location>
</feature>
<feature type="turn" evidence="78">
    <location>
        <begin position="635"/>
        <end position="637"/>
    </location>
</feature>
<feature type="strand" evidence="78">
    <location>
        <begin position="645"/>
        <end position="647"/>
    </location>
</feature>
<feature type="helix" evidence="78">
    <location>
        <begin position="648"/>
        <end position="650"/>
    </location>
</feature>
<feature type="strand" evidence="78">
    <location>
        <begin position="651"/>
        <end position="653"/>
    </location>
</feature>
<feature type="strand" evidence="78">
    <location>
        <begin position="655"/>
        <end position="659"/>
    </location>
</feature>
<feature type="helix" evidence="78">
    <location>
        <begin position="661"/>
        <end position="676"/>
    </location>
</feature>
<feature type="turn" evidence="78">
    <location>
        <begin position="677"/>
        <end position="679"/>
    </location>
</feature>
<feature type="helix" evidence="78">
    <location>
        <begin position="689"/>
        <end position="692"/>
    </location>
</feature>
<feature type="strand" evidence="78">
    <location>
        <begin position="696"/>
        <end position="706"/>
    </location>
</feature>
<feature type="strand" evidence="78">
    <location>
        <begin position="718"/>
        <end position="725"/>
    </location>
</feature>
<feature type="strand" evidence="78">
    <location>
        <begin position="729"/>
        <end position="731"/>
    </location>
</feature>
<feature type="strand" evidence="78">
    <location>
        <begin position="739"/>
        <end position="745"/>
    </location>
</feature>
<feature type="strand" evidence="78">
    <location>
        <begin position="750"/>
        <end position="753"/>
    </location>
</feature>
<feature type="strand" evidence="78">
    <location>
        <begin position="760"/>
        <end position="777"/>
    </location>
</feature>
<feature type="strand" evidence="78">
    <location>
        <begin position="782"/>
        <end position="788"/>
    </location>
</feature>
<feature type="strand" evidence="78">
    <location>
        <begin position="791"/>
        <end position="795"/>
    </location>
</feature>
<feature type="strand" evidence="78">
    <location>
        <begin position="799"/>
        <end position="803"/>
    </location>
</feature>
<feature type="helix" evidence="78">
    <location>
        <begin position="818"/>
        <end position="838"/>
    </location>
</feature>
<feature type="strand" evidence="78">
    <location>
        <begin position="841"/>
        <end position="843"/>
    </location>
</feature>
<feature type="strand" evidence="78">
    <location>
        <begin position="845"/>
        <end position="847"/>
    </location>
</feature>
<feature type="helix" evidence="78">
    <location>
        <begin position="848"/>
        <end position="854"/>
    </location>
</feature>
<feature type="helix" evidence="78">
    <location>
        <begin position="860"/>
        <end position="868"/>
    </location>
</feature>
<feature type="strand" evidence="78">
    <location>
        <begin position="871"/>
        <end position="874"/>
    </location>
</feature>
<feature type="strand" evidence="78">
    <location>
        <begin position="877"/>
        <end position="879"/>
    </location>
</feature>
<feature type="strand" evidence="78">
    <location>
        <begin position="882"/>
        <end position="885"/>
    </location>
</feature>
<feature type="helix" evidence="78">
    <location>
        <begin position="894"/>
        <end position="900"/>
    </location>
</feature>
<feature type="helix" evidence="78">
    <location>
        <begin position="903"/>
        <end position="921"/>
    </location>
</feature>
<feature type="helix" evidence="78">
    <location>
        <begin position="926"/>
        <end position="928"/>
    </location>
</feature>
<feature type="helix" evidence="78">
    <location>
        <begin position="946"/>
        <end position="949"/>
    </location>
</feature>
<feature type="helix" evidence="78">
    <location>
        <begin position="952"/>
        <end position="963"/>
    </location>
</feature>
<feature type="strand" evidence="78">
    <location>
        <begin position="968"/>
        <end position="973"/>
    </location>
</feature>
<feature type="strand" evidence="78">
    <location>
        <begin position="979"/>
        <end position="983"/>
    </location>
</feature>
<feature type="strand" evidence="78">
    <location>
        <begin position="985"/>
        <end position="989"/>
    </location>
</feature>
<feature type="helix" evidence="81">
    <location>
        <begin position="1014"/>
        <end position="1018"/>
    </location>
</feature>
<feature type="helix" evidence="81">
    <location>
        <begin position="1020"/>
        <end position="1031"/>
    </location>
</feature>
<feature type="helix" evidence="81">
    <location>
        <begin position="1035"/>
        <end position="1039"/>
    </location>
</feature>
<feature type="helix" evidence="81">
    <location>
        <begin position="1043"/>
        <end position="1055"/>
    </location>
</feature>
<feature type="helix" evidence="78">
    <location>
        <begin position="1076"/>
        <end position="1099"/>
    </location>
</feature>
<feature type="strand" evidence="81">
    <location>
        <begin position="1186"/>
        <end position="1191"/>
    </location>
</feature>
<feature type="turn" evidence="81">
    <location>
        <begin position="1195"/>
        <end position="1197"/>
    </location>
</feature>
<feature type="strand" evidence="81">
    <location>
        <begin position="1201"/>
        <end position="1206"/>
    </location>
</feature>
<feature type="helix" evidence="81">
    <location>
        <begin position="1209"/>
        <end position="1224"/>
    </location>
</feature>
<feature type="helix" evidence="81">
    <location>
        <begin position="1238"/>
        <end position="1262"/>
    </location>
</feature>
<feature type="helix" evidence="83">
    <location>
        <begin position="1402"/>
        <end position="1418"/>
    </location>
</feature>
<feature type="helix" evidence="83">
    <location>
        <begin position="1424"/>
        <end position="1426"/>
    </location>
</feature>
<feature type="strand" evidence="77">
    <location>
        <begin position="1427"/>
        <end position="1429"/>
    </location>
</feature>
<feature type="turn" evidence="83">
    <location>
        <begin position="1432"/>
        <end position="1434"/>
    </location>
</feature>
<feature type="helix" evidence="83">
    <location>
        <begin position="1438"/>
        <end position="1441"/>
    </location>
</feature>
<feature type="helix" evidence="83">
    <location>
        <begin position="1448"/>
        <end position="1456"/>
    </location>
</feature>
<feature type="helix" evidence="83">
    <location>
        <begin position="1463"/>
        <end position="1480"/>
    </location>
</feature>
<feature type="strand" evidence="77">
    <location>
        <begin position="1483"/>
        <end position="1485"/>
    </location>
</feature>
<feature type="helix" evidence="83">
    <location>
        <begin position="1486"/>
        <end position="1504"/>
    </location>
</feature>
<feature type="helix" evidence="83">
    <location>
        <begin position="1506"/>
        <end position="1516"/>
    </location>
</feature>
<feature type="helix" evidence="83">
    <location>
        <begin position="1518"/>
        <end position="1521"/>
    </location>
</feature>
<feature type="helix" evidence="79">
    <location>
        <begin position="1523"/>
        <end position="1538"/>
    </location>
</feature>
<feature type="turn" evidence="79">
    <location>
        <begin position="1539"/>
        <end position="1542"/>
    </location>
</feature>
<feature type="helix" evidence="79">
    <location>
        <begin position="1547"/>
        <end position="1549"/>
    </location>
</feature>
<feature type="turn" evidence="79">
    <location>
        <begin position="1555"/>
        <end position="1557"/>
    </location>
</feature>
<feature type="strand" evidence="80">
    <location>
        <begin position="1558"/>
        <end position="1560"/>
    </location>
</feature>
<feature type="helix" evidence="79">
    <location>
        <begin position="1561"/>
        <end position="1564"/>
    </location>
</feature>
<feature type="strand" evidence="80">
    <location>
        <begin position="1565"/>
        <end position="1567"/>
    </location>
</feature>
<feature type="helix" evidence="79">
    <location>
        <begin position="1571"/>
        <end position="1579"/>
    </location>
</feature>
<feature type="helix" evidence="79">
    <location>
        <begin position="1586"/>
        <end position="1604"/>
    </location>
</feature>
<feature type="strand" evidence="82">
    <location>
        <begin position="1606"/>
        <end position="1608"/>
    </location>
</feature>
<feature type="helix" evidence="79">
    <location>
        <begin position="1609"/>
        <end position="1627"/>
    </location>
</feature>
<feature type="helix" evidence="79">
    <location>
        <begin position="1629"/>
        <end position="1655"/>
    </location>
</feature>
<feature type="modified residue" description="Phosphoserine" evidence="74">
    <location sequence="P21675-16">
        <position position="1718"/>
    </location>
</feature>
<feature type="modified residue" description="Phosphoserine" evidence="74">
    <location sequence="P21675-18">
        <position position="1721"/>
    </location>
</feature>
<feature type="modified residue" description="Phosphoserine" evidence="74">
    <location sequence="P21675-22">
        <position position="1723"/>
    </location>
</feature>
<feature type="modified residue" description="Phosphoserine" evidence="74">
    <location sequence="P21675-25">
        <position position="1721"/>
    </location>
</feature>
<reference key="1">
    <citation type="journal article" date="1991" name="Mol. Cell. Biol.">
        <title>The human CCG1 gene, essential for progression of the G1 phase, encodes a 210-kilodalton nuclear DNA-binding protein.</title>
        <authorList>
            <person name="Sekiguchi T."/>
            <person name="Nohiro Y."/>
            <person name="Nakamura Y."/>
            <person name="Hisamoto N."/>
            <person name="Nishimoto T."/>
        </authorList>
    </citation>
    <scope>NUCLEOTIDE SEQUENCE [MRNA] (ISOFORM 1)</scope>
    <scope>FUNCTION</scope>
    <scope>SUBCELLULAR LOCATION</scope>
    <source>
        <tissue>Laryngeal carcinoma</tissue>
    </source>
</reference>
<reference key="2">
    <citation type="journal article" date="1993" name="Nature">
        <title>Cloning and expression of human TAFII250: a TBP-associated factor implicated in cell-cycle regulation.</title>
        <authorList>
            <person name="Ruppert S."/>
            <person name="Wang E.H."/>
            <person name="Tjian R."/>
        </authorList>
    </citation>
    <scope>NUCLEOTIDE SEQUENCE [MRNA] (ISOFORM 1)</scope>
    <scope>INTERACTION WITH TBP AND TAFS</scope>
</reference>
<reference key="3">
    <citation type="journal article" date="2007" name="Am. J. Hum. Genet.">
        <title>Reduced neuron-specific expression of the TAF1 gene is associated with X-linked dystonia-parkinsonism.</title>
        <authorList>
            <person name="Makino S."/>
            <person name="Kaji R."/>
            <person name="Ando S."/>
            <person name="Tomizawa M."/>
            <person name="Yasuno K."/>
            <person name="Goto S."/>
            <person name="Matsumoto S."/>
            <person name="Tabuena M.D."/>
            <person name="Maranon E."/>
            <person name="Dantes M."/>
            <person name="Lee L.V."/>
            <person name="Ogasawara K."/>
            <person name="Tooyama I."/>
            <person name="Akatsu H."/>
            <person name="Nishimura M."/>
            <person name="Tamiya G."/>
        </authorList>
    </citation>
    <scope>NUCLEOTIDE SEQUENCE [MRNA] (ISOFORM N-TAF1)</scope>
    <scope>INVOLVEMENT IN DYT3</scope>
    <source>
        <tissue>Brain</tissue>
    </source>
</reference>
<reference key="4">
    <citation type="submission" date="2004-05" db="EMBL/GenBank/DDBJ databases">
        <authorList>
            <consortium name="NIEHS SNPs program"/>
        </authorList>
    </citation>
    <scope>NUCLEOTIDE SEQUENCE [GENOMIC DNA] (ISOFORM 2)</scope>
    <scope>VARIANT VAL-290</scope>
</reference>
<reference key="5">
    <citation type="journal article" date="2005" name="Nature">
        <title>The DNA sequence of the human X chromosome.</title>
        <authorList>
            <person name="Ross M.T."/>
            <person name="Grafham D.V."/>
            <person name="Coffey A.J."/>
            <person name="Scherer S."/>
            <person name="McLay K."/>
            <person name="Muzny D."/>
            <person name="Platzer M."/>
            <person name="Howell G.R."/>
            <person name="Burrows C."/>
            <person name="Bird C.P."/>
            <person name="Frankish A."/>
            <person name="Lovell F.L."/>
            <person name="Howe K.L."/>
            <person name="Ashurst J.L."/>
            <person name="Fulton R.S."/>
            <person name="Sudbrak R."/>
            <person name="Wen G."/>
            <person name="Jones M.C."/>
            <person name="Hurles M.E."/>
            <person name="Andrews T.D."/>
            <person name="Scott C.E."/>
            <person name="Searle S."/>
            <person name="Ramser J."/>
            <person name="Whittaker A."/>
            <person name="Deadman R."/>
            <person name="Carter N.P."/>
            <person name="Hunt S.E."/>
            <person name="Chen R."/>
            <person name="Cree A."/>
            <person name="Gunaratne P."/>
            <person name="Havlak P."/>
            <person name="Hodgson A."/>
            <person name="Metzker M.L."/>
            <person name="Richards S."/>
            <person name="Scott G."/>
            <person name="Steffen D."/>
            <person name="Sodergren E."/>
            <person name="Wheeler D.A."/>
            <person name="Worley K.C."/>
            <person name="Ainscough R."/>
            <person name="Ambrose K.D."/>
            <person name="Ansari-Lari M.A."/>
            <person name="Aradhya S."/>
            <person name="Ashwell R.I."/>
            <person name="Babbage A.K."/>
            <person name="Bagguley C.L."/>
            <person name="Ballabio A."/>
            <person name="Banerjee R."/>
            <person name="Barker G.E."/>
            <person name="Barlow K.F."/>
            <person name="Barrett I.P."/>
            <person name="Bates K.N."/>
            <person name="Beare D.M."/>
            <person name="Beasley H."/>
            <person name="Beasley O."/>
            <person name="Beck A."/>
            <person name="Bethel G."/>
            <person name="Blechschmidt K."/>
            <person name="Brady N."/>
            <person name="Bray-Allen S."/>
            <person name="Bridgeman A.M."/>
            <person name="Brown A.J."/>
            <person name="Brown M.J."/>
            <person name="Bonnin D."/>
            <person name="Bruford E.A."/>
            <person name="Buhay C."/>
            <person name="Burch P."/>
            <person name="Burford D."/>
            <person name="Burgess J."/>
            <person name="Burrill W."/>
            <person name="Burton J."/>
            <person name="Bye J.M."/>
            <person name="Carder C."/>
            <person name="Carrel L."/>
            <person name="Chako J."/>
            <person name="Chapman J.C."/>
            <person name="Chavez D."/>
            <person name="Chen E."/>
            <person name="Chen G."/>
            <person name="Chen Y."/>
            <person name="Chen Z."/>
            <person name="Chinault C."/>
            <person name="Ciccodicola A."/>
            <person name="Clark S.Y."/>
            <person name="Clarke G."/>
            <person name="Clee C.M."/>
            <person name="Clegg S."/>
            <person name="Clerc-Blankenburg K."/>
            <person name="Clifford K."/>
            <person name="Cobley V."/>
            <person name="Cole C.G."/>
            <person name="Conquer J.S."/>
            <person name="Corby N."/>
            <person name="Connor R.E."/>
            <person name="David R."/>
            <person name="Davies J."/>
            <person name="Davis C."/>
            <person name="Davis J."/>
            <person name="Delgado O."/>
            <person name="Deshazo D."/>
            <person name="Dhami P."/>
            <person name="Ding Y."/>
            <person name="Dinh H."/>
            <person name="Dodsworth S."/>
            <person name="Draper H."/>
            <person name="Dugan-Rocha S."/>
            <person name="Dunham A."/>
            <person name="Dunn M."/>
            <person name="Durbin K.J."/>
            <person name="Dutta I."/>
            <person name="Eades T."/>
            <person name="Ellwood M."/>
            <person name="Emery-Cohen A."/>
            <person name="Errington H."/>
            <person name="Evans K.L."/>
            <person name="Faulkner L."/>
            <person name="Francis F."/>
            <person name="Frankland J."/>
            <person name="Fraser A.E."/>
            <person name="Galgoczy P."/>
            <person name="Gilbert J."/>
            <person name="Gill R."/>
            <person name="Gloeckner G."/>
            <person name="Gregory S.G."/>
            <person name="Gribble S."/>
            <person name="Griffiths C."/>
            <person name="Grocock R."/>
            <person name="Gu Y."/>
            <person name="Gwilliam R."/>
            <person name="Hamilton C."/>
            <person name="Hart E.A."/>
            <person name="Hawes A."/>
            <person name="Heath P.D."/>
            <person name="Heitmann K."/>
            <person name="Hennig S."/>
            <person name="Hernandez J."/>
            <person name="Hinzmann B."/>
            <person name="Ho S."/>
            <person name="Hoffs M."/>
            <person name="Howden P.J."/>
            <person name="Huckle E.J."/>
            <person name="Hume J."/>
            <person name="Hunt P.J."/>
            <person name="Hunt A.R."/>
            <person name="Isherwood J."/>
            <person name="Jacob L."/>
            <person name="Johnson D."/>
            <person name="Jones S."/>
            <person name="de Jong P.J."/>
            <person name="Joseph S.S."/>
            <person name="Keenan S."/>
            <person name="Kelly S."/>
            <person name="Kershaw J.K."/>
            <person name="Khan Z."/>
            <person name="Kioschis P."/>
            <person name="Klages S."/>
            <person name="Knights A.J."/>
            <person name="Kosiura A."/>
            <person name="Kovar-Smith C."/>
            <person name="Laird G.K."/>
            <person name="Langford C."/>
            <person name="Lawlor S."/>
            <person name="Leversha M."/>
            <person name="Lewis L."/>
            <person name="Liu W."/>
            <person name="Lloyd C."/>
            <person name="Lloyd D.M."/>
            <person name="Loulseged H."/>
            <person name="Loveland J.E."/>
            <person name="Lovell J.D."/>
            <person name="Lozado R."/>
            <person name="Lu J."/>
            <person name="Lyne R."/>
            <person name="Ma J."/>
            <person name="Maheshwari M."/>
            <person name="Matthews L.H."/>
            <person name="McDowall J."/>
            <person name="McLaren S."/>
            <person name="McMurray A."/>
            <person name="Meidl P."/>
            <person name="Meitinger T."/>
            <person name="Milne S."/>
            <person name="Miner G."/>
            <person name="Mistry S.L."/>
            <person name="Morgan M."/>
            <person name="Morris S."/>
            <person name="Mueller I."/>
            <person name="Mullikin J.C."/>
            <person name="Nguyen N."/>
            <person name="Nordsiek G."/>
            <person name="Nyakatura G."/>
            <person name="O'dell C.N."/>
            <person name="Okwuonu G."/>
            <person name="Palmer S."/>
            <person name="Pandian R."/>
            <person name="Parker D."/>
            <person name="Parrish J."/>
            <person name="Pasternak S."/>
            <person name="Patel D."/>
            <person name="Pearce A.V."/>
            <person name="Pearson D.M."/>
            <person name="Pelan S.E."/>
            <person name="Perez L."/>
            <person name="Porter K.M."/>
            <person name="Ramsey Y."/>
            <person name="Reichwald K."/>
            <person name="Rhodes S."/>
            <person name="Ridler K.A."/>
            <person name="Schlessinger D."/>
            <person name="Schueler M.G."/>
            <person name="Sehra H.K."/>
            <person name="Shaw-Smith C."/>
            <person name="Shen H."/>
            <person name="Sheridan E.M."/>
            <person name="Shownkeen R."/>
            <person name="Skuce C.D."/>
            <person name="Smith M.L."/>
            <person name="Sotheran E.C."/>
            <person name="Steingruber H.E."/>
            <person name="Steward C.A."/>
            <person name="Storey R."/>
            <person name="Swann R.M."/>
            <person name="Swarbreck D."/>
            <person name="Tabor P.E."/>
            <person name="Taudien S."/>
            <person name="Taylor T."/>
            <person name="Teague B."/>
            <person name="Thomas K."/>
            <person name="Thorpe A."/>
            <person name="Timms K."/>
            <person name="Tracey A."/>
            <person name="Trevanion S."/>
            <person name="Tromans A.C."/>
            <person name="d'Urso M."/>
            <person name="Verduzco D."/>
            <person name="Villasana D."/>
            <person name="Waldron L."/>
            <person name="Wall M."/>
            <person name="Wang Q."/>
            <person name="Warren J."/>
            <person name="Warry G.L."/>
            <person name="Wei X."/>
            <person name="West A."/>
            <person name="Whitehead S.L."/>
            <person name="Whiteley M.N."/>
            <person name="Wilkinson J.E."/>
            <person name="Willey D.L."/>
            <person name="Williams G."/>
            <person name="Williams L."/>
            <person name="Williamson A."/>
            <person name="Williamson H."/>
            <person name="Wilming L."/>
            <person name="Woodmansey R.L."/>
            <person name="Wray P.W."/>
            <person name="Yen J."/>
            <person name="Zhang J."/>
            <person name="Zhou J."/>
            <person name="Zoghbi H."/>
            <person name="Zorilla S."/>
            <person name="Buck D."/>
            <person name="Reinhardt R."/>
            <person name="Poustka A."/>
            <person name="Rosenthal A."/>
            <person name="Lehrach H."/>
            <person name="Meindl A."/>
            <person name="Minx P.J."/>
            <person name="Hillier L.W."/>
            <person name="Willard H.F."/>
            <person name="Wilson R.K."/>
            <person name="Waterston R.H."/>
            <person name="Rice C.M."/>
            <person name="Vaudin M."/>
            <person name="Coulson A."/>
            <person name="Nelson D.L."/>
            <person name="Weinstock G."/>
            <person name="Sulston J.E."/>
            <person name="Durbin R.M."/>
            <person name="Hubbard T."/>
            <person name="Gibbs R.A."/>
            <person name="Beck S."/>
            <person name="Rogers J."/>
            <person name="Bentley D.R."/>
        </authorList>
    </citation>
    <scope>NUCLEOTIDE SEQUENCE [LARGE SCALE GENOMIC DNA]</scope>
</reference>
<reference key="6">
    <citation type="journal article" date="1988" name="EMBO J.">
        <title>Molecular cloning of the cDNA of human X chromosomal gene (CCG1) which complements the temperature-sensitive G1 mutants, tsBN462 and ts13, of the BHK cell line.</title>
        <authorList>
            <person name="Sekiguchi T."/>
            <person name="Miyata T."/>
            <person name="Nishimoto T."/>
        </authorList>
    </citation>
    <scope>NUCLEOTIDE SEQUENCE [MRNA] OF 61-1604 (ISOFORM 1)</scope>
</reference>
<reference key="7">
    <citation type="submission" date="2005-03" db="EMBL/GenBank/DDBJ databases">
        <authorList>
            <person name="Totoki Y."/>
            <person name="Toyoda A."/>
            <person name="Takeda T."/>
            <person name="Sakaki Y."/>
            <person name="Tanaka A."/>
            <person name="Yokoyama S."/>
            <person name="Ohara O."/>
            <person name="Nagase T."/>
            <person name="Kikuno R.F."/>
        </authorList>
    </citation>
    <scope>NUCLEOTIDE SEQUENCE [LARGE SCALE MRNA] OF 858-1893 (ISOFORM 4)</scope>
    <source>
        <tissue>Brain</tissue>
    </source>
</reference>
<reference key="8">
    <citation type="journal article" date="2003" name="Proc. Natl. Acad. Sci. U.S.A.">
        <title>Specific sequence changes in multiple transcript system DYT3 are associated with X-linked dystonia parkinsonism.</title>
        <authorList>
            <person name="Nolte D."/>
            <person name="Niemann S."/>
            <person name="Muller U."/>
        </authorList>
    </citation>
    <scope>NUCLEOTIDE SEQUENCE [MRNA] OF 1368-1893 (ISOFORMS 2A; 2C; 2D AND 2E)</scope>
    <scope>NUCLEOTIDE SEQUENCE [MRNA] OF 1519-1893 (ISOFORM 16)</scope>
    <scope>NUCLEOTIDE SEQUENCE [MRNA] OF 1749-1893 (ISOFORM 15)</scope>
    <scope>INVOLVEMENT IN DYT3</scope>
    <source>
        <tissue>Fetal brain</tissue>
    </source>
</reference>
<reference key="9">
    <citation type="journal article" date="2007" name="Mamm. Genome">
        <title>Structural and functional analysis of the human TAF1/DYT3 multiple transcript system.</title>
        <authorList>
            <person name="Herzfeld T."/>
            <person name="Nolte D."/>
            <person name="Muller U."/>
        </authorList>
    </citation>
    <scope>SEQUENCE REVISION (ISOFORMS 2A; 2C; 2D AND 2E)</scope>
    <scope>NUCLEOTIDE SEQUENCE [MRNA] OF 1368-1893 (ISOFORMS 2E; 2G; 2H AND 2I)</scope>
    <scope>ALTERNATIVE SPLICING</scope>
</reference>
<reference key="10">
    <citation type="journal article" date="1993" name="Nature">
        <title>The p250 subunit of native TATA box-binding factor TFIID is the cell-cycle regulatory protein CCG1.</title>
        <authorList>
            <person name="Hisatake K."/>
            <person name="Hasegawa S."/>
            <person name="Takada R."/>
            <person name="Nakatani Y."/>
            <person name="Horikoshi M."/>
            <person name="Roeder R.G."/>
        </authorList>
    </citation>
    <scope>FUNCTION</scope>
</reference>
<reference key="11">
    <citation type="journal article" date="1996" name="Cell">
        <title>TAFII250 is a bipartite protein kinase that phosphorylates the base transcription factor RAP74.</title>
        <authorList>
            <person name="Dikstein R."/>
            <person name="Ruppert S."/>
            <person name="Tjian R."/>
        </authorList>
    </citation>
    <scope>FUNCTION</scope>
    <scope>ACTIVITY REGULATION</scope>
    <scope>PHOSPHORYLATION AT SER-137 AND SER-328</scope>
    <scope>ATP-BINDING</scope>
</reference>
<reference key="12">
    <citation type="journal article" date="1996" name="Genes Dev.">
        <title>TAF-like function of SV40 large T antigen.</title>
        <authorList>
            <person name="Damania B."/>
            <person name="Alwine J.C."/>
        </authorList>
    </citation>
    <scope>INTERACTION WITH SV40 LARGE T ANTIGEN (MICROBIAL INFECTION)</scope>
</reference>
<reference key="13">
    <citation type="journal article" date="1996" name="Mol. Cell. Biol.">
        <title>Interaction of the viral activator protein ICP4 with TFIID through TAF250.</title>
        <authorList>
            <person name="Carrozza M.J."/>
            <person name="DeLuca N.A."/>
        </authorList>
    </citation>
    <scope>INTERACTION WITH HERPES SIMPLEX VIRUS 1 ICP4 (MICROBIAL INFECTION)</scope>
</reference>
<reference key="14">
    <citation type="journal article" date="1998" name="Mol. Cell">
        <title>Functional analysis of the human TAFII250 N-terminal kinase domain.</title>
        <authorList>
            <person name="O'Brien T."/>
            <person name="Tjian R."/>
        </authorList>
    </citation>
    <scope>FUNCTION</scope>
    <scope>MUTAGENESIS</scope>
</reference>
<reference key="15">
    <citation type="journal article" date="1999" name="Mol. Cell. Biol.">
        <title>Rb inhibits the intrinsic kinase activity of TATA-binding protein-associated factor TAFII250.</title>
        <authorList>
            <person name="Siegert J.L."/>
            <person name="Robbins P.D."/>
        </authorList>
    </citation>
    <scope>FUNCTION</scope>
    <scope>ACTIVITY REGULATION</scope>
    <scope>INTERACTION WITH RB1</scope>
    <scope>ATP-BINDING</scope>
</reference>
<reference key="16">
    <citation type="journal article" date="2000" name="Genes Cells">
        <title>A human homologue of yeast anti-silencing factor has histone chaperone activity.</title>
        <authorList>
            <person name="Munakata T."/>
            <person name="Adachi N."/>
            <person name="Yokoyama N."/>
            <person name="Kuzuhara T."/>
            <person name="Horikoshi M."/>
        </authorList>
    </citation>
    <scope>INTERACTION WITH ASF1A</scope>
</reference>
<reference key="17">
    <citation type="journal article" date="2001" name="J. Biol. Chem.">
        <title>Taf(II) 250 phosphorylates human transcription factor IIA on serine residues important for TBP binding and transcription activity.</title>
        <authorList>
            <person name="Solow S."/>
            <person name="Salunek M."/>
            <person name="Ryan R."/>
            <person name="Lieberman P.M."/>
        </authorList>
    </citation>
    <scope>FUNCTION</scope>
</reference>
<reference key="18">
    <citation type="journal article" date="2001" name="Proc. Natl. Acad. Sci. U.S.A.">
        <title>TAFII55 binding to TAFII250 inhibits its acetyltransferase activity.</title>
        <authorList>
            <person name="Gegonne A."/>
            <person name="Weissman J.D."/>
            <person name="Singer D.S."/>
        </authorList>
    </citation>
    <scope>ACTIVITY REGULATION</scope>
    <scope>INTERACTION WITH TAF7</scope>
</reference>
<reference key="19">
    <citation type="journal article" date="2002" name="Proc. Natl. Acad. Sci. U.S.A.">
        <title>Identification and characterization of CIA/ASF1 as an interactor of bromodomains associated with TFIID.</title>
        <authorList>
            <person name="Chimura T."/>
            <person name="Kuzuhara T."/>
            <person name="Horikoshi M."/>
        </authorList>
    </citation>
    <scope>INTERACTION WITH ASF1A</scope>
</reference>
<reference key="20">
    <citation type="journal article" date="2003" name="J. Biol. Chem.">
        <title>Transcription initiation factor IID-interactive histone chaperone CIA-II implicated in mammalian spermatogenesis.</title>
        <authorList>
            <person name="Umehara T."/>
            <person name="Horikoshi M."/>
        </authorList>
    </citation>
    <scope>INTERACTION WITH ASF1A AND ASF1B</scope>
</reference>
<reference key="21">
    <citation type="journal article" date="2004" name="Mol. Cell">
        <title>Phosphorylation on Thr-55 by TAF1 mediates degradation of p53: a role for TAF1 in cell G1 progression.</title>
        <authorList>
            <person name="Li H.-H."/>
            <person name="Li A.G."/>
            <person name="Sheppard H.M."/>
            <person name="Liu X."/>
        </authorList>
    </citation>
    <scope>FUNCTION</scope>
    <scope>INTERACTION WITH TP53</scope>
</reference>
<reference key="22">
    <citation type="journal article" date="2005" name="Cell">
        <title>Physical association and coordinate function of the H3 K4 methyltransferase MLL1 and the H4 K16 acetyltransferase MOF.</title>
        <authorList>
            <person name="Dou Y."/>
            <person name="Milne T.A."/>
            <person name="Tackett A.J."/>
            <person name="Smith E.R."/>
            <person name="Fukuda A."/>
            <person name="Wysocka J."/>
            <person name="Allis C.D."/>
            <person name="Chait B.T."/>
            <person name="Hess J.L."/>
            <person name="Roeder R.G."/>
        </authorList>
    </citation>
    <scope>IDENTIFICATION IN THE MLL1/MLL COMPLEX</scope>
</reference>
<reference key="23">
    <citation type="journal article" date="2005" name="Mol. Cell. Biol.">
        <title>TAF1 histone acetyltransferase activity in Sp1 activation of the cyclin D1 promoter.</title>
        <authorList>
            <person name="Hilton T.L."/>
            <person name="Li Y."/>
            <person name="Dunphy E.L."/>
            <person name="Wang E.H."/>
        </authorList>
    </citation>
    <scope>HISTONE ACETYLTRANSFERASE ACTIVITY</scope>
    <scope>MUTAGENESIS OF GLU-742 AND 848-MET--ASP-850</scope>
</reference>
<reference key="24">
    <citation type="journal article" date="2008" name="Proc. Natl. Acad. Sci. U.S.A.">
        <title>A quantitative atlas of mitotic phosphorylation.</title>
        <authorList>
            <person name="Dephoure N."/>
            <person name="Zhou C."/>
            <person name="Villen J."/>
            <person name="Beausoleil S.A."/>
            <person name="Bakalarski C.E."/>
            <person name="Elledge S.J."/>
            <person name="Gygi S.P."/>
        </authorList>
    </citation>
    <scope>IDENTIFICATION BY MASS SPECTROMETRY [LARGE SCALE ANALYSIS]</scope>
    <source>
        <tissue>Cervix carcinoma</tissue>
    </source>
</reference>
<reference key="25">
    <citation type="journal article" date="2009" name="Sci. Signal.">
        <title>Quantitative phosphoproteomic analysis of T cell receptor signaling reveals system-wide modulation of protein-protein interactions.</title>
        <authorList>
            <person name="Mayya V."/>
            <person name="Lundgren D.H."/>
            <person name="Hwang S.-I."/>
            <person name="Rezaul K."/>
            <person name="Wu L."/>
            <person name="Eng J.K."/>
            <person name="Rodionov V."/>
            <person name="Han D.K."/>
        </authorList>
    </citation>
    <scope>PHOSPHORYLATION [LARGE SCALE ANALYSIS] AT SER-1847</scope>
    <scope>IDENTIFICATION BY MASS SPECTROMETRY [LARGE SCALE ANALYSIS]</scope>
    <source>
        <tissue>Leukemic T-cell</tissue>
    </source>
</reference>
<reference key="26">
    <citation type="journal article" date="2010" name="Sci. Signal.">
        <title>Quantitative phosphoproteomics reveals widespread full phosphorylation site occupancy during mitosis.</title>
        <authorList>
            <person name="Olsen J.V."/>
            <person name="Vermeulen M."/>
            <person name="Santamaria A."/>
            <person name="Kumar C."/>
            <person name="Miller M.L."/>
            <person name="Jensen L.J."/>
            <person name="Gnad F."/>
            <person name="Cox J."/>
            <person name="Jensen T.S."/>
            <person name="Nigg E.A."/>
            <person name="Brunak S."/>
            <person name="Mann M."/>
        </authorList>
    </citation>
    <scope>PHOSPHORYLATION [LARGE SCALE ANALYSIS] AT SER-1721 (ISOFORMS 2A AND 4)</scope>
    <scope>PHOSPHORYLATION [LARGE SCALE ANALYSIS] AT SER-1723 (ISOFORM 2G)</scope>
    <scope>PHOSPHORYLATION [LARGE SCALE ANALYSIS] AT SER-1718 (ISOFORM 16)</scope>
    <scope>IDENTIFICATION BY MASS SPECTROMETRY [LARGE SCALE ANALYSIS]</scope>
    <source>
        <tissue>Cervix carcinoma</tissue>
    </source>
</reference>
<reference key="27">
    <citation type="journal article" date="2012" name="Mol. Cell. Biol.">
        <title>Phosphorylation-dependent regulation of cyclin D1 and cyclin A gene transcription by TFIID subunits TAF1 and TAF7.</title>
        <authorList>
            <person name="Kloet S.L."/>
            <person name="Whiting J.L."/>
            <person name="Gafken P."/>
            <person name="Ranish J."/>
            <person name="Wang E.H."/>
        </authorList>
    </citation>
    <scope>ACTIVITY REGULATION</scope>
</reference>
<reference key="28">
    <citation type="journal article" date="2013" name="Hum. Mol. Genet.">
        <title>X-linked dystonia parkinsonism syndrome (XDP, lubag): disease-specific sequence change DSC3 in TAF1/DYT3 affects genes in vesicular transport and dopamine metabolism.</title>
        <authorList>
            <person name="Herzfeld T."/>
            <person name="Nolte D."/>
            <person name="Grznarova M."/>
            <person name="Hofmann A."/>
            <person name="Schultze J.L."/>
            <person name="Muller U."/>
        </authorList>
    </citation>
    <scope>MISCELLANEOUS</scope>
</reference>
<reference key="29">
    <citation type="journal article" date="2014" name="J. Proteomics">
        <title>An enzyme assisted RP-RPLC approach for in-depth analysis of human liver phosphoproteome.</title>
        <authorList>
            <person name="Bian Y."/>
            <person name="Song C."/>
            <person name="Cheng K."/>
            <person name="Dong M."/>
            <person name="Wang F."/>
            <person name="Huang J."/>
            <person name="Sun D."/>
            <person name="Wang L."/>
            <person name="Ye M."/>
            <person name="Zou H."/>
        </authorList>
    </citation>
    <scope>PHOSPHORYLATION [LARGE SCALE ANALYSIS] AT SER-328</scope>
    <scope>IDENTIFICATION BY MASS SPECTROMETRY [LARGE SCALE ANALYSIS]</scope>
    <source>
        <tissue>Liver</tissue>
    </source>
</reference>
<reference key="30">
    <citation type="journal article" date="2015" name="Genes Dev.">
        <title>Screen identifies bromodomain protein ZMYND8 in chromatin recognition of transcription-associated DNA damage that promotes homologous recombination.</title>
        <authorList>
            <person name="Gong F."/>
            <person name="Chiu L.Y."/>
            <person name="Cox B."/>
            <person name="Aymard F."/>
            <person name="Clouaire T."/>
            <person name="Leung J.W."/>
            <person name="Cammarata M."/>
            <person name="Perez M."/>
            <person name="Agarwal P."/>
            <person name="Brodbelt J.S."/>
            <person name="Legube G."/>
            <person name="Miller K.M."/>
        </authorList>
    </citation>
    <scope>SUBCELLULAR LOCATION</scope>
</reference>
<reference key="31">
    <citation type="journal article" date="2017" name="Nat. Struct. Mol. Biol.">
        <title>Site-specific mapping of the human SUMO proteome reveals co-modification with phosphorylation.</title>
        <authorList>
            <person name="Hendriks I.A."/>
            <person name="Lyon D."/>
            <person name="Young C."/>
            <person name="Jensen L.J."/>
            <person name="Vertegaal A.C."/>
            <person name="Nielsen M.L."/>
        </authorList>
    </citation>
    <scope>SUMOYLATION [LARGE SCALE ANALYSIS] AT LYS-570 AND LYS-583</scope>
    <scope>IDENTIFICATION BY MASS SPECTROMETRY [LARGE SCALE ANALYSIS]</scope>
</reference>
<reference key="32">
    <citation type="journal article" date="2000" name="Science">
        <title>Structure and function of a human TAFII250 double bromodomain module.</title>
        <authorList>
            <person name="Jacobson R.H."/>
            <person name="Ladurner A.G."/>
            <person name="King D.S."/>
            <person name="Tjian R."/>
        </authorList>
    </citation>
    <scope>X-RAY CRYSTALLOGRAPHY (2.1 ANGSTROMS) OF 1380-1659</scope>
</reference>
<reference key="33">
    <citation type="journal article" date="2012" name="Cell">
        <title>Histone recognition and large-scale structural analysis of the human bromodomain family.</title>
        <authorList>
            <person name="Filippakopoulos P."/>
            <person name="Picaud S."/>
            <person name="Mangos M."/>
            <person name="Keates T."/>
            <person name="Lambert J.P."/>
            <person name="Barsyte-Lovejoy D."/>
            <person name="Felletar I."/>
            <person name="Volkmer R."/>
            <person name="Muller S."/>
            <person name="Pawson T."/>
            <person name="Gingras A.C."/>
            <person name="Arrowsmith C.H."/>
            <person name="Knapp S."/>
        </authorList>
    </citation>
    <scope>X-RAY CRYSTALLOGRAPHY (1.89 ANGSTROMS) OF 1522-1656</scope>
    <scope>SUBUNIT</scope>
</reference>
<reference key="34">
    <citation type="journal article" date="2014" name="Cell Res.">
        <title>Crystal structure of a TAF1-TAF7 complex in human transcription factor IID reveals a promoter binding module.</title>
        <authorList>
            <person name="Wang H."/>
            <person name="Curran E.C."/>
            <person name="Hinds T.R."/>
            <person name="Wang E.H."/>
            <person name="Zheng N."/>
        </authorList>
    </citation>
    <scope>X-RAY CRYSTALLOGRAPHY (2.30 ANGSTROMS) OF 600-1236 IN COMPLEX WITH TAF7</scope>
    <scope>FUNCTION</scope>
    <scope>INTERACTION WITH TAF7</scope>
</reference>
<reference key="35">
    <citation type="journal article" date="2015" name="Structure">
        <title>A subset of human bromodomains recognizes butyryllysine and crotonyllysine histone peptide modifications.</title>
        <authorList>
            <person name="Flynn E.M."/>
            <person name="Huang O.W."/>
            <person name="Poy F."/>
            <person name="Oppikofer M."/>
            <person name="Bellon S.F."/>
            <person name="Tang Y."/>
            <person name="Cochran A.G."/>
        </authorList>
    </citation>
    <scope>X-RAY CRYSTALLOGRAPHY (1.50 ANGSTROMS) OF 1518-1659 IN COMPLEX WITH CROTONYLATED OR BUTYRYLATED HISTONE H4</scope>
</reference>
<reference key="36">
    <citation type="journal article" date="2016" name="Nature">
        <title>Structure of promoter-bound TFIID and model of human pre-initiation complex assembly.</title>
        <authorList>
            <person name="Louder R.K."/>
            <person name="He Y."/>
            <person name="Lopez-Blanco J.R."/>
            <person name="Fang J."/>
            <person name="Chacon P."/>
            <person name="Nogales E."/>
        </authorList>
    </citation>
    <scope>STRUCTURE BY ELECTRON MICROSCOPY (8.50 ANGSTROMS)</scope>
    <scope>SUBCELLULAR LOCATION</scope>
</reference>
<reference evidence="41" key="37">
    <citation type="submission" date="2018-01" db="PDB data bank">
        <title>Bivalent Inhibitor UNC4512 Bound to the TAF1 Bromodomain Tandem.</title>
        <authorList>
            <person name="Mathea S."/>
            <person name="Suh J.L."/>
            <person name="Salah E."/>
            <person name="Tallant C."/>
            <person name="Siejka P."/>
            <person name="Pike A.C.W."/>
            <person name="von Delft F."/>
            <person name="Arrowsmith C.H."/>
            <person name="Edwards A.M."/>
            <person name="Bountra C."/>
            <person name="James L.I."/>
            <person name="Frye S.V."/>
            <person name="Knapp S."/>
        </authorList>
    </citation>
    <scope>X-RAY CRYSTALLOGRAPHY (2.18 ANGSTROMS) OF 1380-1659</scope>
</reference>
<reference evidence="42 43" key="38">
    <citation type="submission" date="2019-05" db="PDB data bank">
        <title>Crystal Structure Analysis of TAF1 Bromodomain.</title>
        <authorList>
            <person name="Seo H.-S."/>
            <person name="Dhe-Paganon S."/>
        </authorList>
    </citation>
    <scope>X-RAY CRYSTALLOGRAPHY (2.94 ANGSTROMS) OF 1521-1656</scope>
</reference>
<reference evidence="56" key="39">
    <citation type="submission" date="2020-07" db="PDB data bank">
        <title>Crystal structure of the second bromodomain (BD2) of human TAF1 bound to ATR kinase inhibitor AZ20.</title>
        <authorList>
            <person name="Karim M.R."/>
            <person name="Schonbrunn E."/>
        </authorList>
    </citation>
    <scope>X-RAY CRYSTALLOGRAPHY (1.60 ANGSTROMS) OF 1522-1656</scope>
</reference>
<reference evidence="57" key="40">
    <citation type="submission" date="2020-07" db="PDB data bank">
        <title>Crystal structure of the unliganded tandem bromodomain (BD1, BD2) of human TAF1.</title>
        <authorList>
            <person name="Karim M.R."/>
            <person name="Schonbrunn E."/>
        </authorList>
    </citation>
    <scope>X-RAY CRYSTALLOGRAPHY (2.10 ANGSTROMS) OF 1394-1656</scope>
</reference>
<reference evidence="58" key="41">
    <citation type="submission" date="2020-08" db="PDB data bank">
        <title>Crystal structure of the second bromodomain (BD2) of human TAF1 bound to the ATR kinase inhibitor AZD6738.</title>
        <authorList>
            <person name="Karim M.R."/>
            <person name="Schonbrunn E."/>
        </authorList>
    </citation>
    <scope>X-RAY CRYSTALLOGRAPHY (1.70 ANGSTROMS) OF 1522-1656</scope>
</reference>
<reference evidence="59" key="42">
    <citation type="submission" date="2020-08" db="PDB data bank">
        <title>Crystal structure of the second bromodomain (BD2) of human TAF1 bound to ZS1-322.</title>
        <authorList>
            <person name="Karim M.R."/>
            <person name="Schonbrunn E."/>
        </authorList>
    </citation>
    <scope>X-RAY CRYSTALLOGRAPHY (2.05 ANGSTROMS) OF 1522-1656</scope>
</reference>
<reference evidence="60" key="43">
    <citation type="submission" date="2020-09" db="PDB data bank">
        <title>Crystal structure of the tandem bromodomain (BD1 and BD2) of human TAF1 bound to ATR kinase inhibitor AZD6738.</title>
        <authorList>
            <person name="Karim M.R."/>
            <person name="Schonbrunn E."/>
        </authorList>
    </citation>
    <scope>X-RAY CRYSTALLOGRAPHY (1.60 ANGSTROMS) OF 1394-1656</scope>
</reference>
<reference evidence="61" key="44">
    <citation type="submission" date="2020-09" db="PDB data bank">
        <title>Crystal structure of the tandem bromodomain (BD1, BD2) of human TAF1 bound to mTORC1/2 inhibitor AZD3147.</title>
        <authorList>
            <person name="Karim M.R."/>
            <person name="Schonbrunn E."/>
        </authorList>
    </citation>
    <scope>X-RAY CRYSTALLOGRAPHY (2.20 ANGSTROMS) OF 1394-1656</scope>
</reference>
<reference evidence="62" key="45">
    <citation type="submission" date="2020-09" db="PDB data bank">
        <title>Crystal structure of the second bromodomain (BD2) of human TAF1 bound to PLK1 kinase inhibitor BI2536.</title>
        <authorList>
            <person name="Karim M.R."/>
            <person name="Schonbrunn E."/>
        </authorList>
    </citation>
    <scope>X-RAY CRYSTALLOGRAPHY (2.52 ANGSTROMS) OF 1522-1656</scope>
</reference>
<reference evidence="63" key="46">
    <citation type="submission" date="2020-09" db="PDB data bank">
        <title>Crystal structure of the second bromodomain (BD2) of human TAF1 bound to bromosporine.</title>
        <authorList>
            <person name="Karim M.R."/>
            <person name="Schonbrunn E."/>
        </authorList>
    </citation>
    <scope>X-RAY CRYSTALLOGRAPHY (2.45 ANGSTROMS) OF 1522-1656</scope>
</reference>
<reference evidence="64" key="47">
    <citation type="submission" date="2020-09" db="PDB data bank">
        <title>Crystal structure of the tandem bromodomain (BD1, BD2) of human TAF1 bound to ATR inhibitor AZ20.</title>
        <authorList>
            <person name="Karim M.R."/>
            <person name="Schonbrunn E."/>
        </authorList>
    </citation>
    <scope>X-RAY CRYSTALLOGRAPHY (1.50 ANGSTROMS) OF 1394-1656</scope>
</reference>
<reference evidence="65" key="48">
    <citation type="submission" date="2020-09" db="PDB data bank">
        <title>Crystal structure of the unliganded second bromodomain (BD2) of human TAF1.</title>
        <authorList>
            <person name="Karim M.R."/>
            <person name="Schonbrunn E."/>
        </authorList>
    </citation>
    <scope>X-RAY CRYSTALLOGRAPHY (1.70 ANGSTROMS) OF 1522-1656</scope>
</reference>
<reference evidence="66" key="49">
    <citation type="submission" date="2020-09" db="PDB data bank">
        <title>Crystal structure of the second bromodomain (BD2) of human TAF1 bound to dioxane.</title>
        <authorList>
            <person name="Karim M.R."/>
            <person name="Schonbrunn E."/>
        </authorList>
    </citation>
    <scope>X-RAY CRYSTALLOGRAPHY (1.70 ANGSTROMS) OF 1522-1656</scope>
</reference>
<reference evidence="67" key="50">
    <citation type="submission" date="2020-09" db="PDB data bank">
        <title>Crystal structure of the tandem bromodomain (BD1, BD2) of human TAF1 in complex with MES (2-(N-morpholino)ethanesulfonic acid).</title>
        <authorList>
            <person name="Karim M.R."/>
            <person name="Bikowitz M.J."/>
            <person name="Schonbrunn E."/>
        </authorList>
    </citation>
    <scope>X-RAY CRYSTALLOGRAPHY (1.86 ANGSTROMS) OF 1394-1656</scope>
</reference>
<reference evidence="68" key="51">
    <citation type="submission" date="2020-12" db="PDB data bank">
        <title>Crystal structure of the tandem bromodomain (BD1, BD2) of human TAF1 bound to GNE-371.</title>
        <authorList>
            <person name="Karim M.R."/>
            <person name="Schonbrunn E."/>
        </authorList>
    </citation>
    <scope>X-RAY CRYSTALLOGRAPHY (2.75 ANGSTROMS) OF 1394-1656</scope>
</reference>
<reference evidence="69" key="52">
    <citation type="submission" date="2021-01" db="PDB data bank">
        <title>Crystal structure of the tandem bromodomain (BD1, BD2) of human TAF1 bound to ZS1-295.</title>
        <authorList>
            <person name="Karim M.R."/>
            <person name="Schonbrunn E."/>
        </authorList>
    </citation>
    <scope>X-RAY CRYSTALLOGRAPHY (2.33 ANGSTROMS) OF 1394-1656</scope>
</reference>
<reference evidence="70" key="53">
    <citation type="submission" date="2021-01" db="PDB data bank">
        <title>Crystal structure of the tandem bromodomain (BD1, BD2) of human TAF1 bound to ZS1-585.</title>
        <authorList>
            <person name="Karim M.R."/>
            <person name="Schonbrunn E."/>
        </authorList>
    </citation>
    <scope>X-RAY CRYSTALLOGRAPHY (1.35 ANGSTROMS) OF 1394-1656</scope>
</reference>
<reference evidence="71" key="54">
    <citation type="submission" date="2021-01" db="PDB data bank">
        <title>Crystal structure of the tandem bromodomain (BD1, BD2) of human TAF1 bound to ZS1-589.</title>
        <authorList>
            <person name="Karim M.R."/>
            <person name="Schonbrunn E."/>
        </authorList>
    </citation>
    <scope>X-RAY CRYSTALLOGRAPHY (1.70 ANGSTROMS) OF 1394-1656</scope>
</reference>
<reference evidence="72" key="55">
    <citation type="submission" date="2021-06" db="PDB data bank">
        <title>Crystal structure of the tandem bromodomain of human TAF1 (TAF1-T) bound to ZS1-681.</title>
        <authorList>
            <person name="Karim M.R."/>
            <person name="Schonbrunn E."/>
        </authorList>
    </citation>
    <scope>X-RAY CRYSTALLOGRAPHY (1.90 ANGSTROMS) OF 1394-1656</scope>
</reference>
<reference evidence="44 45 46 47 48 49 50 51 52 53" key="56">
    <citation type="journal article" date="2021" name="Science">
        <title>Structural insights into preinitiation complex assembly on core promoters.</title>
        <authorList>
            <person name="Chen X."/>
            <person name="Qi Y."/>
            <person name="Wu Z."/>
            <person name="Wang X."/>
            <person name="Li J."/>
            <person name="Zhao D."/>
            <person name="Hou H."/>
            <person name="Li Y."/>
            <person name="Yu Z."/>
            <person name="Liu W."/>
            <person name="Wang M."/>
            <person name="Ren Y."/>
            <person name="Li Z."/>
            <person name="Yang H."/>
            <person name="Xu Y."/>
        </authorList>
    </citation>
    <scope>STRUCTURE BY ELECTRON MICROSCOPY (3.04 ANGSTROMS)</scope>
    <scope>FUNCTION</scope>
    <scope>IDENTIFICATION IN THE TFIID COMPLEX</scope>
    <scope>SUBUNIT</scope>
</reference>
<reference key="57">
    <citation type="journal article" date="2007" name="Nature">
        <title>Patterns of somatic mutation in human cancer genomes.</title>
        <authorList>
            <person name="Greenman C."/>
            <person name="Stephens P."/>
            <person name="Smith R."/>
            <person name="Dalgliesh G.L."/>
            <person name="Hunter C."/>
            <person name="Bignell G."/>
            <person name="Davies H."/>
            <person name="Teague J."/>
            <person name="Butler A."/>
            <person name="Stevens C."/>
            <person name="Edkins S."/>
            <person name="O'Meara S."/>
            <person name="Vastrik I."/>
            <person name="Schmidt E.E."/>
            <person name="Avis T."/>
            <person name="Barthorpe S."/>
            <person name="Bhamra G."/>
            <person name="Buck G."/>
            <person name="Choudhury B."/>
            <person name="Clements J."/>
            <person name="Cole J."/>
            <person name="Dicks E."/>
            <person name="Forbes S."/>
            <person name="Gray K."/>
            <person name="Halliday K."/>
            <person name="Harrison R."/>
            <person name="Hills K."/>
            <person name="Hinton J."/>
            <person name="Jenkinson A."/>
            <person name="Jones D."/>
            <person name="Menzies A."/>
            <person name="Mironenko T."/>
            <person name="Perry J."/>
            <person name="Raine K."/>
            <person name="Richardson D."/>
            <person name="Shepherd R."/>
            <person name="Small A."/>
            <person name="Tofts C."/>
            <person name="Varian J."/>
            <person name="Webb T."/>
            <person name="West S."/>
            <person name="Widaa S."/>
            <person name="Yates A."/>
            <person name="Cahill D.P."/>
            <person name="Louis D.N."/>
            <person name="Goldstraw P."/>
            <person name="Nicholson A.G."/>
            <person name="Brasseur F."/>
            <person name="Looijenga L."/>
            <person name="Weber B.L."/>
            <person name="Chiew Y.-E."/>
            <person name="DeFazio A."/>
            <person name="Greaves M.F."/>
            <person name="Green A.R."/>
            <person name="Campbell P."/>
            <person name="Birney E."/>
            <person name="Easton D.F."/>
            <person name="Chenevix-Trench G."/>
            <person name="Tan M.-H."/>
            <person name="Khoo S.K."/>
            <person name="Teh B.T."/>
            <person name="Yuen S.T."/>
            <person name="Leung S.Y."/>
            <person name="Wooster R."/>
            <person name="Futreal P.A."/>
            <person name="Stratton M.R."/>
        </authorList>
    </citation>
    <scope>VARIANTS [LARGE SCALE ANALYSIS] VAL-290; GLY-318; ASP-474; LYS-672 AND ILE-712</scope>
</reference>
<reference key="58">
    <citation type="journal article" date="2015" name="Am. J. Hum. Genet.">
        <title>TAF1 Variants Are Associated with Dysmorphic Features, Intellectual Disability, and Neurological Manifestations.</title>
        <authorList>
            <person name="O'Rawe J.A."/>
            <person name="Wu Y."/>
            <person name="Doerfel M.J."/>
            <person name="Rope A.F."/>
            <person name="Au P.Y."/>
            <person name="Parboosingh J.S."/>
            <person name="Moon S."/>
            <person name="Kousi M."/>
            <person name="Kosma K."/>
            <person name="Smith C.S."/>
            <person name="Tzetis M."/>
            <person name="Schuette J.L."/>
            <person name="Hufnagel R.B."/>
            <person name="Prada C.E."/>
            <person name="Martinez F."/>
            <person name="Orellana C."/>
            <person name="Crain J."/>
            <person name="Caro-Llopis A."/>
            <person name="Oltra S."/>
            <person name="Monfort S."/>
            <person name="Jimenez-Barron L.T."/>
            <person name="Swensen J."/>
            <person name="Ellingwood S."/>
            <person name="Smith R."/>
            <person name="Fang H."/>
            <person name="Ospina S."/>
            <person name="Stegmann S."/>
            <person name="Den Hollander N."/>
            <person name="Mittelman D."/>
            <person name="Highnam G."/>
            <person name="Robison R."/>
            <person name="Yang E."/>
            <person name="Faivre L."/>
            <person name="Roubertie A."/>
            <person name="Riviere J.B."/>
            <person name="Monaghan K.G."/>
            <person name="Wang K."/>
            <person name="Davis E.E."/>
            <person name="Katsanis N."/>
            <person name="Kalscheuer V.M."/>
            <person name="Wang E.H."/>
            <person name="Metcalfe K."/>
            <person name="Kleefstra T."/>
            <person name="Innes A.M."/>
            <person name="Kitsiou-Tzeli S."/>
            <person name="Rosello M."/>
            <person name="Keegan C.E."/>
            <person name="Lyon G.J."/>
        </authorList>
    </citation>
    <scope>INVOLVEMENT IN MRXS33</scope>
    <scope>VARIANTS MRXS33 SER-596; ARG-807; HIS-976; TRP-1246; THR-1337; HIS-1452 AND HIS-1517</scope>
</reference>
<reference key="59">
    <citation type="journal article" date="2016" name="Mol. Psychiatry">
        <title>X-exome sequencing of 405 unresolved families identifies seven novel intellectual disability genes.</title>
        <authorList>
            <person name="Hu H."/>
            <person name="Haas S.A."/>
            <person name="Chelly J."/>
            <person name="Van Esch H."/>
            <person name="Raynaud M."/>
            <person name="de Brouwer A.P."/>
            <person name="Weinert S."/>
            <person name="Froyen G."/>
            <person name="Frints S.G."/>
            <person name="Laumonnier F."/>
            <person name="Zemojtel T."/>
            <person name="Love M.I."/>
            <person name="Richard H."/>
            <person name="Emde A.K."/>
            <person name="Bienek M."/>
            <person name="Jensen C."/>
            <person name="Hambrock M."/>
            <person name="Fischer U."/>
            <person name="Langnick C."/>
            <person name="Feldkamp M."/>
            <person name="Wissink-Lindhout W."/>
            <person name="Lebrun N."/>
            <person name="Castelnau L."/>
            <person name="Rucci J."/>
            <person name="Montjean R."/>
            <person name="Dorseuil O."/>
            <person name="Billuart P."/>
            <person name="Stuhlmann T."/>
            <person name="Shaw M."/>
            <person name="Corbett M.A."/>
            <person name="Gardner A."/>
            <person name="Willis-Owen S."/>
            <person name="Tan C."/>
            <person name="Friend K.L."/>
            <person name="Belet S."/>
            <person name="van Roozendaal K.E."/>
            <person name="Jimenez-Pocquet M."/>
            <person name="Moizard M.P."/>
            <person name="Ronce N."/>
            <person name="Sun R."/>
            <person name="O'Keeffe S."/>
            <person name="Chenna R."/>
            <person name="van Boemmel A."/>
            <person name="Goeke J."/>
            <person name="Hackett A."/>
            <person name="Field M."/>
            <person name="Christie L."/>
            <person name="Boyle J."/>
            <person name="Haan E."/>
            <person name="Nelson J."/>
            <person name="Turner G."/>
            <person name="Baynam G."/>
            <person name="Gillessen-Kaesbach G."/>
            <person name="Mueller U."/>
            <person name="Steinberger D."/>
            <person name="Budny B."/>
            <person name="Badura-Stronka M."/>
            <person name="Latos-Bielenska A."/>
            <person name="Ousager L.B."/>
            <person name="Wieacker P."/>
            <person name="Rodriguez Criado G."/>
            <person name="Bondeson M.L."/>
            <person name="Anneren G."/>
            <person name="Dufke A."/>
            <person name="Cohen M."/>
            <person name="Van Maldergem L."/>
            <person name="Vincent-Delorme C."/>
            <person name="Echenne B."/>
            <person name="Simon-Bouy B."/>
            <person name="Kleefstra T."/>
            <person name="Willemsen M."/>
            <person name="Fryns J.P."/>
            <person name="Devriendt K."/>
            <person name="Ullmann R."/>
            <person name="Vingron M."/>
            <person name="Wrogemann K."/>
            <person name="Wienker T.F."/>
            <person name="Tzschach A."/>
            <person name="van Bokhoven H."/>
            <person name="Gecz J."/>
            <person name="Jentsch T.J."/>
            <person name="Chen W."/>
            <person name="Ropers H.H."/>
            <person name="Kalscheuer V.M."/>
        </authorList>
    </citation>
    <scope>VARIANTS ASP-493 AND CYS-1190</scope>
</reference>
<name>TAF1_HUMAN</name>
<protein>
    <recommendedName>
        <fullName evidence="38">Transcription initiation factor TFIID subunit 1</fullName>
        <ecNumber evidence="12">2.3.1.48</ecNumber>
        <ecNumber>2.7.11.1</ecNumber>
    </recommendedName>
    <alternativeName>
        <fullName>Cell cycle gene 1 protein</fullName>
    </alternativeName>
    <alternativeName>
        <fullName>TBP-associated factor 250 kDa</fullName>
        <shortName>p250</shortName>
    </alternativeName>
    <alternativeName>
        <fullName>Transcription initiation factor TFIID 250 kDa subunit</fullName>
        <shortName>TAF(II)250</shortName>
        <shortName>TAFII-250</shortName>
        <shortName>TAFII250</shortName>
    </alternativeName>
</protein>
<dbReference type="EC" id="2.3.1.48" evidence="12"/>
<dbReference type="EC" id="2.7.11.1"/>
<dbReference type="EMBL" id="D90359">
    <property type="protein sequence ID" value="BAA14374.1"/>
    <property type="molecule type" value="mRNA"/>
</dbReference>
<dbReference type="EMBL" id="AB300418">
    <property type="protein sequence ID" value="BAG15901.1"/>
    <property type="molecule type" value="mRNA"/>
</dbReference>
<dbReference type="EMBL" id="AY623109">
    <property type="protein sequence ID" value="AAT38105.1"/>
    <property type="molecule type" value="Genomic_DNA"/>
</dbReference>
<dbReference type="EMBL" id="AL590762">
    <property type="status" value="NOT_ANNOTATED_CDS"/>
    <property type="molecule type" value="Genomic_DNA"/>
</dbReference>
<dbReference type="EMBL" id="AL590763">
    <property type="status" value="NOT_ANNOTATED_CDS"/>
    <property type="molecule type" value="Genomic_DNA"/>
</dbReference>
<dbReference type="EMBL" id="X07024">
    <property type="protein sequence ID" value="CAA30073.1"/>
    <property type="status" value="ALT_SEQ"/>
    <property type="molecule type" value="mRNA"/>
</dbReference>
<dbReference type="EMBL" id="AB209316">
    <property type="protein sequence ID" value="BAD92553.1"/>
    <property type="molecule type" value="mRNA"/>
</dbReference>
<dbReference type="EMBL" id="AJ549247">
    <property type="protein sequence ID" value="CAD70490.1"/>
    <property type="molecule type" value="mRNA"/>
</dbReference>
<dbReference type="EMBL" id="AJ549248">
    <property type="protein sequence ID" value="CAD70491.3"/>
    <property type="molecule type" value="mRNA"/>
</dbReference>
<dbReference type="EMBL" id="AJ549249">
    <property type="protein sequence ID" value="CAD70492.2"/>
    <property type="molecule type" value="mRNA"/>
</dbReference>
<dbReference type="EMBL" id="AJ549250">
    <property type="protein sequence ID" value="CAD70493.3"/>
    <property type="molecule type" value="mRNA"/>
</dbReference>
<dbReference type="EMBL" id="AJ555148">
    <property type="protein sequence ID" value="CAD87527.2"/>
    <property type="molecule type" value="mRNA"/>
</dbReference>
<dbReference type="EMBL" id="AJ555149">
    <property type="protein sequence ID" value="CAD87528.2"/>
    <property type="molecule type" value="mRNA"/>
</dbReference>
<dbReference type="EMBL" id="AM711892">
    <property type="protein sequence ID" value="CAM98555.1"/>
    <property type="molecule type" value="mRNA"/>
</dbReference>
<dbReference type="EMBL" id="AM711893">
    <property type="protein sequence ID" value="CAM98556.1"/>
    <property type="molecule type" value="mRNA"/>
</dbReference>
<dbReference type="EMBL" id="AM711894">
    <property type="protein sequence ID" value="CAM98557.1"/>
    <property type="molecule type" value="mRNA"/>
</dbReference>
<dbReference type="EMBL" id="AM711895">
    <property type="protein sequence ID" value="CAM98558.1"/>
    <property type="molecule type" value="mRNA"/>
</dbReference>
<dbReference type="CCDS" id="CCDS14412.2">
    <molecule id="P21675-14"/>
</dbReference>
<dbReference type="CCDS" id="CCDS35325.2">
    <molecule id="P21675-13"/>
</dbReference>
<dbReference type="PIR" id="A40262">
    <property type="entry name" value="A40262"/>
</dbReference>
<dbReference type="RefSeq" id="NP_001273003.1">
    <property type="nucleotide sequence ID" value="NM_001286074.1"/>
</dbReference>
<dbReference type="RefSeq" id="NP_004597.2">
    <molecule id="P21675-14"/>
    <property type="nucleotide sequence ID" value="NM_004606.4"/>
</dbReference>
<dbReference type="RefSeq" id="NP_620278.2">
    <molecule id="P21675-13"/>
    <property type="nucleotide sequence ID" value="NM_138923.4"/>
</dbReference>
<dbReference type="RefSeq" id="XP_005262352.1">
    <property type="nucleotide sequence ID" value="XM_005262295.1"/>
</dbReference>
<dbReference type="RefSeq" id="XP_047298351.1">
    <molecule id="P21675-14"/>
    <property type="nucleotide sequence ID" value="XM_047442395.1"/>
</dbReference>
<dbReference type="RefSeq" id="XP_047298355.1">
    <molecule id="P21675-13"/>
    <property type="nucleotide sequence ID" value="XM_047442399.1"/>
</dbReference>
<dbReference type="RefSeq" id="XP_054183607.1">
    <molecule id="P21675-14"/>
    <property type="nucleotide sequence ID" value="XM_054327632.1"/>
</dbReference>
<dbReference type="RefSeq" id="XP_054183611.1">
    <molecule id="P21675-13"/>
    <property type="nucleotide sequence ID" value="XM_054327636.1"/>
</dbReference>
<dbReference type="PDB" id="1EQF">
    <property type="method" value="X-ray"/>
    <property type="resolution" value="2.10 A"/>
    <property type="chains" value="A=1380-1659"/>
</dbReference>
<dbReference type="PDB" id="3AAD">
    <property type="method" value="X-ray"/>
    <property type="resolution" value="3.30 A"/>
    <property type="chains" value="A=1363-1650"/>
</dbReference>
<dbReference type="PDB" id="3UV4">
    <property type="method" value="X-ray"/>
    <property type="resolution" value="1.89 A"/>
    <property type="chains" value="A/B=1522-1656"/>
</dbReference>
<dbReference type="PDB" id="3UV5">
    <property type="method" value="X-ray"/>
    <property type="resolution" value="2.03 A"/>
    <property type="chains" value="A=1394-1656"/>
</dbReference>
<dbReference type="PDB" id="4RGW">
    <property type="method" value="X-ray"/>
    <property type="resolution" value="2.30 A"/>
    <property type="chains" value="A=600-1236"/>
</dbReference>
<dbReference type="PDB" id="4YYM">
    <property type="method" value="X-ray"/>
    <property type="resolution" value="1.50 A"/>
    <property type="chains" value="A/B=1518-1659"/>
</dbReference>
<dbReference type="PDB" id="4YYN">
    <property type="method" value="X-ray"/>
    <property type="resolution" value="1.85 A"/>
    <property type="chains" value="A/B=1518-1659"/>
</dbReference>
<dbReference type="PDB" id="5FUR">
    <property type="method" value="EM"/>
    <property type="resolution" value="8.50 A"/>
    <property type="chains" value="G=1-1893"/>
</dbReference>
<dbReference type="PDB" id="5I1Q">
    <property type="method" value="X-ray"/>
    <property type="resolution" value="1.50 A"/>
    <property type="chains" value="A=1518-1659"/>
</dbReference>
<dbReference type="PDB" id="5I29">
    <property type="method" value="X-ray"/>
    <property type="resolution" value="1.21 A"/>
    <property type="chains" value="A=1518-1659"/>
</dbReference>
<dbReference type="PDB" id="5MG2">
    <property type="method" value="X-ray"/>
    <property type="resolution" value="1.75 A"/>
    <property type="chains" value="A=1522-1656"/>
</dbReference>
<dbReference type="PDB" id="6BQD">
    <property type="method" value="X-ray"/>
    <property type="resolution" value="2.14 A"/>
    <property type="chains" value="A/B=1522-1651"/>
</dbReference>
<dbReference type="PDB" id="6FIC">
    <property type="method" value="X-ray"/>
    <property type="resolution" value="2.18 A"/>
    <property type="chains" value="T=1380-1659"/>
</dbReference>
<dbReference type="PDB" id="6MZD">
    <property type="method" value="EM"/>
    <property type="resolution" value="9.80 A"/>
    <property type="chains" value="A=21-1893"/>
</dbReference>
<dbReference type="PDB" id="6MZL">
    <property type="method" value="EM"/>
    <property type="resolution" value="23.00 A"/>
    <property type="chains" value="A=1-1893"/>
</dbReference>
<dbReference type="PDB" id="6MZM">
    <property type="method" value="EM"/>
    <property type="resolution" value="7.50 A"/>
    <property type="chains" value="A=609-1104"/>
</dbReference>
<dbReference type="PDB" id="6P38">
    <property type="method" value="X-ray"/>
    <property type="resolution" value="2.80 A"/>
    <property type="chains" value="A=1522-1656"/>
</dbReference>
<dbReference type="PDB" id="6P39">
    <property type="method" value="X-ray"/>
    <property type="resolution" value="2.94 A"/>
    <property type="chains" value="A=1521-1656"/>
</dbReference>
<dbReference type="PDB" id="6P3A">
    <property type="method" value="X-ray"/>
    <property type="resolution" value="2.99 A"/>
    <property type="chains" value="A/B=1522-1656"/>
</dbReference>
<dbReference type="PDB" id="7EDX">
    <property type="method" value="EM"/>
    <property type="resolution" value="4.50 A"/>
    <property type="chains" value="A=1-1893"/>
</dbReference>
<dbReference type="PDB" id="7EG7">
    <property type="method" value="EM"/>
    <property type="resolution" value="6.20 A"/>
    <property type="chains" value="A=1-1893"/>
</dbReference>
<dbReference type="PDB" id="7EG8">
    <property type="method" value="EM"/>
    <property type="resolution" value="7.40 A"/>
    <property type="chains" value="A=1-1893"/>
</dbReference>
<dbReference type="PDB" id="7EG9">
    <property type="method" value="EM"/>
    <property type="resolution" value="3.70 A"/>
    <property type="chains" value="A=1-1893"/>
</dbReference>
<dbReference type="PDB" id="7EGA">
    <property type="method" value="EM"/>
    <property type="resolution" value="4.10 A"/>
    <property type="chains" value="A=1-1893"/>
</dbReference>
<dbReference type="PDB" id="7EGB">
    <property type="method" value="EM"/>
    <property type="resolution" value="3.30 A"/>
    <property type="chains" value="A=1-1893"/>
</dbReference>
<dbReference type="PDB" id="7EGC">
    <property type="method" value="EM"/>
    <property type="resolution" value="3.90 A"/>
    <property type="chains" value="A=1-1893"/>
</dbReference>
<dbReference type="PDB" id="7EGD">
    <property type="method" value="EM"/>
    <property type="resolution" value="6.75 A"/>
    <property type="chains" value="A=1-1893"/>
</dbReference>
<dbReference type="PDB" id="7EGE">
    <property type="method" value="EM"/>
    <property type="resolution" value="9.00 A"/>
    <property type="chains" value="A=1-1893"/>
</dbReference>
<dbReference type="PDB" id="7EGH">
    <property type="method" value="EM"/>
    <property type="resolution" value="3.04 A"/>
    <property type="chains" value="A=1-1893"/>
</dbReference>
<dbReference type="PDB" id="7EGI">
    <property type="method" value="EM"/>
    <property type="resolution" value="9.82 A"/>
    <property type="chains" value="A=1-1893"/>
</dbReference>
<dbReference type="PDB" id="7EGJ">
    <property type="method" value="EM"/>
    <property type="resolution" value="8.64 A"/>
    <property type="chains" value="A=1-1893"/>
</dbReference>
<dbReference type="PDB" id="7ENA">
    <property type="method" value="EM"/>
    <property type="resolution" value="4.07 A"/>
    <property type="chains" value="DA=1-1893"/>
</dbReference>
<dbReference type="PDB" id="7ENC">
    <property type="method" value="EM"/>
    <property type="resolution" value="4.13 A"/>
    <property type="chains" value="DA=1-1893"/>
</dbReference>
<dbReference type="PDB" id="7JJG">
    <property type="method" value="X-ray"/>
    <property type="resolution" value="1.60 A"/>
    <property type="chains" value="A=1522-1656"/>
</dbReference>
<dbReference type="PDB" id="7JJH">
    <property type="method" value="X-ray"/>
    <property type="resolution" value="2.10 A"/>
    <property type="chains" value="A=1394-1656"/>
</dbReference>
<dbReference type="PDB" id="7JSP">
    <property type="method" value="X-ray"/>
    <property type="resolution" value="1.70 A"/>
    <property type="chains" value="A=1522-1656"/>
</dbReference>
<dbReference type="PDB" id="7JTC">
    <property type="method" value="X-ray"/>
    <property type="resolution" value="2.05 A"/>
    <property type="chains" value="A=1522-1656"/>
</dbReference>
<dbReference type="PDB" id="7K03">
    <property type="method" value="X-ray"/>
    <property type="resolution" value="1.60 A"/>
    <property type="chains" value="A=1394-1656"/>
</dbReference>
<dbReference type="PDB" id="7K0D">
    <property type="method" value="X-ray"/>
    <property type="resolution" value="2.20 A"/>
    <property type="chains" value="A=1394-1656"/>
</dbReference>
<dbReference type="PDB" id="7K0U">
    <property type="method" value="X-ray"/>
    <property type="resolution" value="2.52 A"/>
    <property type="chains" value="A/B=1522-1656"/>
</dbReference>
<dbReference type="PDB" id="7K1P">
    <property type="method" value="X-ray"/>
    <property type="resolution" value="2.45 A"/>
    <property type="chains" value="A=1522-1656"/>
</dbReference>
<dbReference type="PDB" id="7K27">
    <property type="method" value="X-ray"/>
    <property type="resolution" value="1.50 A"/>
    <property type="chains" value="A=1394-1656"/>
</dbReference>
<dbReference type="PDB" id="7K3O">
    <property type="method" value="X-ray"/>
    <property type="resolution" value="1.70 A"/>
    <property type="chains" value="A/B=1522-1656"/>
</dbReference>
<dbReference type="PDB" id="7K42">
    <property type="method" value="X-ray"/>
    <property type="resolution" value="1.70 A"/>
    <property type="chains" value="A/B=1522-1656"/>
</dbReference>
<dbReference type="PDB" id="7K6F">
    <property type="method" value="X-ray"/>
    <property type="resolution" value="1.86 A"/>
    <property type="chains" value="A=1394-1656"/>
</dbReference>
<dbReference type="PDB" id="7L6X">
    <property type="method" value="X-ray"/>
    <property type="resolution" value="2.75 A"/>
    <property type="chains" value="A=1394-1656"/>
</dbReference>
<dbReference type="PDB" id="7LB0">
    <property type="method" value="X-ray"/>
    <property type="resolution" value="2.33 A"/>
    <property type="chains" value="A=1394-1656"/>
</dbReference>
<dbReference type="PDB" id="7LB1">
    <property type="method" value="X-ray"/>
    <property type="resolution" value="1.35 A"/>
    <property type="chains" value="A=1394-1656"/>
</dbReference>
<dbReference type="PDB" id="7LB2">
    <property type="method" value="X-ray"/>
    <property type="resolution" value="1.70 A"/>
    <property type="chains" value="A=1394-1656"/>
</dbReference>
<dbReference type="PDB" id="7LB3">
    <property type="method" value="X-ray"/>
    <property type="resolution" value="1.90 A"/>
    <property type="chains" value="A=1522-1656"/>
</dbReference>
<dbReference type="PDB" id="7N42">
    <property type="method" value="X-ray"/>
    <property type="resolution" value="1.90 A"/>
    <property type="chains" value="A=1394-1656"/>
</dbReference>
<dbReference type="PDB" id="7P4S">
    <property type="method" value="X-ray"/>
    <property type="resolution" value="2.17 A"/>
    <property type="chains" value="A=1522-1656"/>
</dbReference>
<dbReference type="PDB" id="7T2I">
    <property type="method" value="X-ray"/>
    <property type="resolution" value="1.89 A"/>
    <property type="chains" value="A=1394-1656"/>
</dbReference>
<dbReference type="PDB" id="7T36">
    <property type="method" value="X-ray"/>
    <property type="resolution" value="1.65 A"/>
    <property type="chains" value="A=1394-1656"/>
</dbReference>
<dbReference type="PDB" id="8GXQ">
    <property type="method" value="EM"/>
    <property type="resolution" value="5.04 A"/>
    <property type="chains" value="DA=1-1893"/>
</dbReference>
<dbReference type="PDB" id="8GXS">
    <property type="method" value="EM"/>
    <property type="resolution" value="4.16 A"/>
    <property type="chains" value="DA=1-1893"/>
</dbReference>
<dbReference type="PDB" id="8WAK">
    <property type="method" value="EM"/>
    <property type="resolution" value="5.47 A"/>
    <property type="chains" value="A=1-1872"/>
</dbReference>
<dbReference type="PDB" id="8WAL">
    <property type="method" value="EM"/>
    <property type="resolution" value="8.52 A"/>
    <property type="chains" value="A=1-1872"/>
</dbReference>
<dbReference type="PDB" id="8WAN">
    <property type="method" value="EM"/>
    <property type="resolution" value="6.07 A"/>
    <property type="chains" value="A=1-1872"/>
</dbReference>
<dbReference type="PDB" id="8WAO">
    <property type="method" value="EM"/>
    <property type="resolution" value="6.40 A"/>
    <property type="chains" value="A=1-1872"/>
</dbReference>
<dbReference type="PDB" id="8WAP">
    <property type="method" value="EM"/>
    <property type="resolution" value="5.85 A"/>
    <property type="chains" value="A=1-1872"/>
</dbReference>
<dbReference type="PDB" id="8WAQ">
    <property type="method" value="EM"/>
    <property type="resolution" value="6.29 A"/>
    <property type="chains" value="A=1-1872"/>
</dbReference>
<dbReference type="PDB" id="8WAR">
    <property type="method" value="EM"/>
    <property type="resolution" value="7.20 A"/>
    <property type="chains" value="A=1-1872"/>
</dbReference>
<dbReference type="PDB" id="8WAS">
    <property type="method" value="EM"/>
    <property type="resolution" value="6.13 A"/>
    <property type="chains" value="A=1-1872"/>
</dbReference>
<dbReference type="PDBsum" id="1EQF"/>
<dbReference type="PDBsum" id="3AAD"/>
<dbReference type="PDBsum" id="3UV4"/>
<dbReference type="PDBsum" id="3UV5"/>
<dbReference type="PDBsum" id="4RGW"/>
<dbReference type="PDBsum" id="4YYM"/>
<dbReference type="PDBsum" id="4YYN"/>
<dbReference type="PDBsum" id="5FUR"/>
<dbReference type="PDBsum" id="5I1Q"/>
<dbReference type="PDBsum" id="5I29"/>
<dbReference type="PDBsum" id="5MG2"/>
<dbReference type="PDBsum" id="6BQD"/>
<dbReference type="PDBsum" id="6FIC"/>
<dbReference type="PDBsum" id="6MZD"/>
<dbReference type="PDBsum" id="6MZL"/>
<dbReference type="PDBsum" id="6MZM"/>
<dbReference type="PDBsum" id="6P38"/>
<dbReference type="PDBsum" id="6P39"/>
<dbReference type="PDBsum" id="6P3A"/>
<dbReference type="PDBsum" id="7EDX"/>
<dbReference type="PDBsum" id="7EG7"/>
<dbReference type="PDBsum" id="7EG8"/>
<dbReference type="PDBsum" id="7EG9"/>
<dbReference type="PDBsum" id="7EGA"/>
<dbReference type="PDBsum" id="7EGB"/>
<dbReference type="PDBsum" id="7EGC"/>
<dbReference type="PDBsum" id="7EGD"/>
<dbReference type="PDBsum" id="7EGE"/>
<dbReference type="PDBsum" id="7EGH"/>
<dbReference type="PDBsum" id="7EGI"/>
<dbReference type="PDBsum" id="7EGJ"/>
<dbReference type="PDBsum" id="7ENA"/>
<dbReference type="PDBsum" id="7ENC"/>
<dbReference type="PDBsum" id="7JJG"/>
<dbReference type="PDBsum" id="7JJH"/>
<dbReference type="PDBsum" id="7JSP"/>
<dbReference type="PDBsum" id="7JTC"/>
<dbReference type="PDBsum" id="7K03"/>
<dbReference type="PDBsum" id="7K0D"/>
<dbReference type="PDBsum" id="7K0U"/>
<dbReference type="PDBsum" id="7K1P"/>
<dbReference type="PDBsum" id="7K27"/>
<dbReference type="PDBsum" id="7K3O"/>
<dbReference type="PDBsum" id="7K42"/>
<dbReference type="PDBsum" id="7K6F"/>
<dbReference type="PDBsum" id="7L6X"/>
<dbReference type="PDBsum" id="7LB0"/>
<dbReference type="PDBsum" id="7LB1"/>
<dbReference type="PDBsum" id="7LB2"/>
<dbReference type="PDBsum" id="7LB3"/>
<dbReference type="PDBsum" id="7N42"/>
<dbReference type="PDBsum" id="7P4S"/>
<dbReference type="PDBsum" id="7T2I"/>
<dbReference type="PDBsum" id="7T36"/>
<dbReference type="PDBsum" id="8GXQ"/>
<dbReference type="PDBsum" id="8GXS"/>
<dbReference type="PDBsum" id="8WAK"/>
<dbReference type="PDBsum" id="8WAL"/>
<dbReference type="PDBsum" id="8WAN"/>
<dbReference type="PDBsum" id="8WAO"/>
<dbReference type="PDBsum" id="8WAP"/>
<dbReference type="PDBsum" id="8WAQ"/>
<dbReference type="PDBsum" id="8WAR"/>
<dbReference type="PDBsum" id="8WAS"/>
<dbReference type="EMDB" id="EMD-31075"/>
<dbReference type="EMDB" id="EMD-31107"/>
<dbReference type="EMDB" id="EMD-31108"/>
<dbReference type="EMDB" id="EMD-31109"/>
<dbReference type="EMDB" id="EMD-31110"/>
<dbReference type="EMDB" id="EMD-31111"/>
<dbReference type="EMDB" id="EMD-31112"/>
<dbReference type="EMDB" id="EMD-31113"/>
<dbReference type="EMDB" id="EMD-31114"/>
<dbReference type="EMDB" id="EMD-31117"/>
<dbReference type="EMDB" id="EMD-31118"/>
<dbReference type="EMDB" id="EMD-31119"/>
<dbReference type="EMDB" id="EMD-31204"/>
<dbReference type="EMDB" id="EMD-31207"/>
<dbReference type="EMDB" id="EMD-34359"/>
<dbReference type="EMDB" id="EMD-34360"/>
<dbReference type="EMDB" id="EMD-37395"/>
<dbReference type="EMDB" id="EMD-37396"/>
<dbReference type="EMDB" id="EMD-37398"/>
<dbReference type="EMDB" id="EMD-37399"/>
<dbReference type="EMDB" id="EMD-37400"/>
<dbReference type="EMDB" id="EMD-37401"/>
<dbReference type="EMDB" id="EMD-37402"/>
<dbReference type="EMDB" id="EMD-37403"/>
<dbReference type="EMDB" id="EMD-9302"/>
<dbReference type="EMDB" id="EMD-9305"/>
<dbReference type="EMDB" id="EMD-9306"/>
<dbReference type="SASBDB" id="P21675"/>
<dbReference type="SMR" id="P21675"/>
<dbReference type="BioGRID" id="112735">
    <property type="interactions" value="252"/>
</dbReference>
<dbReference type="ComplexPortal" id="CPX-915">
    <property type="entry name" value="General transcription factor complex TFIID"/>
</dbReference>
<dbReference type="ComplexPortal" id="CPX-930">
    <property type="entry name" value="General transcription factor complex TFIID, TAF4B variant"/>
</dbReference>
<dbReference type="CORUM" id="P21675"/>
<dbReference type="DIP" id="DIP-147N"/>
<dbReference type="FunCoup" id="P21675">
    <property type="interactions" value="3231"/>
</dbReference>
<dbReference type="IntAct" id="P21675">
    <property type="interactions" value="79"/>
</dbReference>
<dbReference type="MINT" id="P21675"/>
<dbReference type="STRING" id="9606.ENSP00000406549"/>
<dbReference type="BindingDB" id="P21675"/>
<dbReference type="ChEMBL" id="CHEMBL3217390"/>
<dbReference type="GuidetoPHARMACOLOGY" id="2231"/>
<dbReference type="GlyCosmos" id="P21675">
    <property type="glycosylation" value="1 site, 1 glycan"/>
</dbReference>
<dbReference type="GlyGen" id="P21675">
    <property type="glycosylation" value="1 site, 1 O-linked glycan (1 site)"/>
</dbReference>
<dbReference type="iPTMnet" id="P21675"/>
<dbReference type="PhosphoSitePlus" id="P21675"/>
<dbReference type="BioMuta" id="TAF1"/>
<dbReference type="DMDM" id="115942"/>
<dbReference type="jPOST" id="P21675"/>
<dbReference type="MassIVE" id="P21675"/>
<dbReference type="PaxDb" id="9606-ENSP00000406549"/>
<dbReference type="PeptideAtlas" id="P21675"/>
<dbReference type="ProteomicsDB" id="3401"/>
<dbReference type="ProteomicsDB" id="53886">
    <molecule id="P21675-1"/>
</dbReference>
<dbReference type="ProteomicsDB" id="53887">
    <molecule id="P21675-2"/>
</dbReference>
<dbReference type="Pumba" id="P21675"/>
<dbReference type="ABCD" id="P21675">
    <property type="antibodies" value="1 sequenced antibody"/>
</dbReference>
<dbReference type="Antibodypedia" id="346">
    <property type="antibodies" value="300 antibodies from 38 providers"/>
</dbReference>
<dbReference type="DNASU" id="6872"/>
<dbReference type="Ensembl" id="ENST00000373790.9">
    <molecule id="P21675-13"/>
    <property type="protein sequence ID" value="ENSP00000362895.5"/>
    <property type="gene ID" value="ENSG00000147133.18"/>
</dbReference>
<dbReference type="Ensembl" id="ENST00000423759.6">
    <molecule id="P21675-14"/>
    <property type="protein sequence ID" value="ENSP00000406549.2"/>
    <property type="gene ID" value="ENSG00000147133.18"/>
</dbReference>
<dbReference type="Ensembl" id="ENST00000715246.1">
    <molecule id="P21675-2"/>
    <property type="protein sequence ID" value="ENSP00000520427.1"/>
    <property type="gene ID" value="ENSG00000147133.18"/>
</dbReference>
<dbReference type="GeneID" id="6872"/>
<dbReference type="KEGG" id="hsa:6872"/>
<dbReference type="MANE-Select" id="ENST00000423759.6">
    <molecule id="P21675-14"/>
    <property type="protein sequence ID" value="ENSP00000406549.2"/>
    <property type="RefSeq nucleotide sequence ID" value="NM_004606.5"/>
    <property type="RefSeq protein sequence ID" value="NP_004597.3"/>
</dbReference>
<dbReference type="UCSC" id="uc004dzt.6">
    <molecule id="P21675-2"/>
    <property type="organism name" value="human"/>
</dbReference>
<dbReference type="AGR" id="HGNC:11535"/>
<dbReference type="CTD" id="6872"/>
<dbReference type="DisGeNET" id="6872"/>
<dbReference type="GeneCards" id="TAF1"/>
<dbReference type="GeneReviews" id="TAF1"/>
<dbReference type="HGNC" id="HGNC:11535">
    <property type="gene designation" value="TAF1"/>
</dbReference>
<dbReference type="HPA" id="ENSG00000147133">
    <property type="expression patterns" value="Low tissue specificity"/>
</dbReference>
<dbReference type="MalaCards" id="TAF1"/>
<dbReference type="MIM" id="300966">
    <property type="type" value="phenotype"/>
</dbReference>
<dbReference type="MIM" id="313650">
    <property type="type" value="gene"/>
</dbReference>
<dbReference type="MIM" id="314250">
    <property type="type" value="phenotype"/>
</dbReference>
<dbReference type="neXtProt" id="NX_P21675"/>
<dbReference type="OpenTargets" id="ENSG00000147133"/>
<dbReference type="Orphanet" id="53351">
    <property type="disease" value="X-linked dystonia-parkinsonism"/>
</dbReference>
<dbReference type="Orphanet" id="480907">
    <property type="disease" value="X-linked intellectual disability-global development delay-facial dysmorphism-sacral caudal remnant syndrome"/>
</dbReference>
<dbReference type="PharmGKB" id="PA36310"/>
<dbReference type="VEuPathDB" id="HostDB:ENSG00000147133"/>
<dbReference type="eggNOG" id="KOG0008">
    <property type="taxonomic scope" value="Eukaryota"/>
</dbReference>
<dbReference type="GeneTree" id="ENSGT00940000155242"/>
<dbReference type="HOGENOM" id="CLU_000572_3_0_1"/>
<dbReference type="InParanoid" id="P21675"/>
<dbReference type="OMA" id="PARIWYD"/>
<dbReference type="OrthoDB" id="5752at2759"/>
<dbReference type="PAN-GO" id="P21675">
    <property type="GO annotations" value="4 GO annotations based on evolutionary models"/>
</dbReference>
<dbReference type="PhylomeDB" id="P21675"/>
<dbReference type="TreeFam" id="TF313573"/>
<dbReference type="BRENDA" id="2.3.1.48">
    <property type="organism ID" value="2681"/>
</dbReference>
<dbReference type="PathwayCommons" id="P21675"/>
<dbReference type="Reactome" id="R-HSA-167161">
    <property type="pathway name" value="HIV Transcription Initiation"/>
</dbReference>
<dbReference type="Reactome" id="R-HSA-167162">
    <property type="pathway name" value="RNA Polymerase II HIV Promoter Escape"/>
</dbReference>
<dbReference type="Reactome" id="R-HSA-167172">
    <property type="pathway name" value="Transcription of the HIV genome"/>
</dbReference>
<dbReference type="Reactome" id="R-HSA-674695">
    <property type="pathway name" value="RNA Polymerase II Pre-transcription Events"/>
</dbReference>
<dbReference type="Reactome" id="R-HSA-6804756">
    <property type="pathway name" value="Regulation of TP53 Activity through Phosphorylation"/>
</dbReference>
<dbReference type="Reactome" id="R-HSA-73776">
    <property type="pathway name" value="RNA Polymerase II Promoter Escape"/>
</dbReference>
<dbReference type="Reactome" id="R-HSA-73779">
    <property type="pathway name" value="RNA Polymerase II Transcription Pre-Initiation And Promoter Opening"/>
</dbReference>
<dbReference type="Reactome" id="R-HSA-75953">
    <property type="pathway name" value="RNA Polymerase II Transcription Initiation"/>
</dbReference>
<dbReference type="Reactome" id="R-HSA-76042">
    <property type="pathway name" value="RNA Polymerase II Transcription Initiation And Promoter Clearance"/>
</dbReference>
<dbReference type="SignaLink" id="P21675"/>
<dbReference type="SIGNOR" id="P21675"/>
<dbReference type="BioGRID-ORCS" id="6872">
    <property type="hits" value="343 hits in 821 CRISPR screens"/>
</dbReference>
<dbReference type="ChiTaRS" id="TAF1">
    <property type="organism name" value="human"/>
</dbReference>
<dbReference type="EvolutionaryTrace" id="P21675"/>
<dbReference type="GeneWiki" id="TAF1"/>
<dbReference type="GenomeRNAi" id="6872"/>
<dbReference type="Pharos" id="P21675">
    <property type="development level" value="Tchem"/>
</dbReference>
<dbReference type="PRO" id="PR:P21675"/>
<dbReference type="Proteomes" id="UP000005640">
    <property type="component" value="Chromosome X"/>
</dbReference>
<dbReference type="RNAct" id="P21675">
    <property type="molecule type" value="protein"/>
</dbReference>
<dbReference type="Bgee" id="ENSG00000147133">
    <property type="expression patterns" value="Expressed in sural nerve and 182 other cell types or tissues"/>
</dbReference>
<dbReference type="ExpressionAtlas" id="P21675">
    <property type="expression patterns" value="baseline and differential"/>
</dbReference>
<dbReference type="GO" id="GO:0000785">
    <property type="term" value="C:chromatin"/>
    <property type="evidence" value="ECO:0000314"/>
    <property type="project" value="ParkinsonsUK-UCL"/>
</dbReference>
<dbReference type="GO" id="GO:0071339">
    <property type="term" value="C:MLL1 complex"/>
    <property type="evidence" value="ECO:0000314"/>
    <property type="project" value="UniProtKB"/>
</dbReference>
<dbReference type="GO" id="GO:0005654">
    <property type="term" value="C:nucleoplasm"/>
    <property type="evidence" value="ECO:0000314"/>
    <property type="project" value="HPA"/>
</dbReference>
<dbReference type="GO" id="GO:0005634">
    <property type="term" value="C:nucleus"/>
    <property type="evidence" value="ECO:0000314"/>
    <property type="project" value="UniProtKB"/>
</dbReference>
<dbReference type="GO" id="GO:0005669">
    <property type="term" value="C:transcription factor TFIID complex"/>
    <property type="evidence" value="ECO:0000314"/>
    <property type="project" value="UniProtKB"/>
</dbReference>
<dbReference type="GO" id="GO:0005667">
    <property type="term" value="C:transcription regulator complex"/>
    <property type="evidence" value="ECO:0000353"/>
    <property type="project" value="ParkinsonsUK-UCL"/>
</dbReference>
<dbReference type="GO" id="GO:0005524">
    <property type="term" value="F:ATP binding"/>
    <property type="evidence" value="ECO:0007669"/>
    <property type="project" value="UniProtKB-KW"/>
</dbReference>
<dbReference type="GO" id="GO:0004402">
    <property type="term" value="F:histone acetyltransferase activity"/>
    <property type="evidence" value="ECO:0000314"/>
    <property type="project" value="UniProtKB"/>
</dbReference>
<dbReference type="GO" id="GO:0140046">
    <property type="term" value="F:histone H4K16ac reader activity"/>
    <property type="evidence" value="ECO:0000314"/>
    <property type="project" value="BHF-UCL"/>
</dbReference>
<dbReference type="GO" id="GO:0016301">
    <property type="term" value="F:kinase activity"/>
    <property type="evidence" value="ECO:0000314"/>
    <property type="project" value="ParkinsonsUK-UCL"/>
</dbReference>
<dbReference type="GO" id="GO:0016922">
    <property type="term" value="F:nuclear receptor binding"/>
    <property type="evidence" value="ECO:0000353"/>
    <property type="project" value="ParkinsonsUK-UCL"/>
</dbReference>
<dbReference type="GO" id="GO:0002039">
    <property type="term" value="F:p53 binding"/>
    <property type="evidence" value="ECO:0000353"/>
    <property type="project" value="BHF-UCL"/>
</dbReference>
<dbReference type="GO" id="GO:0046982">
    <property type="term" value="F:protein heterodimerization activity"/>
    <property type="evidence" value="ECO:0000353"/>
    <property type="project" value="ParkinsonsUK-UCL"/>
</dbReference>
<dbReference type="GO" id="GO:0004672">
    <property type="term" value="F:protein kinase activity"/>
    <property type="evidence" value="ECO:0000314"/>
    <property type="project" value="ParkinsonsUK-UCL"/>
</dbReference>
<dbReference type="GO" id="GO:0106310">
    <property type="term" value="F:protein serine kinase activity"/>
    <property type="evidence" value="ECO:0007669"/>
    <property type="project" value="RHEA"/>
</dbReference>
<dbReference type="GO" id="GO:0004674">
    <property type="term" value="F:protein serine/threonine kinase activity"/>
    <property type="evidence" value="ECO:0000314"/>
    <property type="project" value="UniProtKB"/>
</dbReference>
<dbReference type="GO" id="GO:0001181">
    <property type="term" value="F:RNA polymerase I general transcription initiation factor activity"/>
    <property type="evidence" value="ECO:0000314"/>
    <property type="project" value="ARUK-UCL"/>
</dbReference>
<dbReference type="GO" id="GO:0000979">
    <property type="term" value="F:RNA polymerase II core promoter sequence-specific DNA binding"/>
    <property type="evidence" value="ECO:0000315"/>
    <property type="project" value="ParkinsonsUK-UCL"/>
</dbReference>
<dbReference type="GO" id="GO:0016251">
    <property type="term" value="F:RNA polymerase II general transcription initiation factor activity"/>
    <property type="evidence" value="ECO:0000314"/>
    <property type="project" value="BHF-UCL"/>
</dbReference>
<dbReference type="GO" id="GO:0001091">
    <property type="term" value="F:RNA polymerase II general transcription initiation factor binding"/>
    <property type="evidence" value="ECO:0000353"/>
    <property type="project" value="BHF-UCL"/>
</dbReference>
<dbReference type="GO" id="GO:0061629">
    <property type="term" value="F:RNA polymerase II-specific DNA-binding transcription factor binding"/>
    <property type="evidence" value="ECO:0000353"/>
    <property type="project" value="ParkinsonsUK-UCL"/>
</dbReference>
<dbReference type="GO" id="GO:0043565">
    <property type="term" value="F:sequence-specific DNA binding"/>
    <property type="evidence" value="ECO:0000250"/>
    <property type="project" value="BHF-UCL"/>
</dbReference>
<dbReference type="GO" id="GO:0017025">
    <property type="term" value="F:TBP-class protein binding"/>
    <property type="evidence" value="ECO:0000353"/>
    <property type="project" value="BHF-UCL"/>
</dbReference>
<dbReference type="GO" id="GO:0140416">
    <property type="term" value="F:transcription regulator inhibitor activity"/>
    <property type="evidence" value="ECO:0000314"/>
    <property type="project" value="ParkinsonsUK-UCL"/>
</dbReference>
<dbReference type="GO" id="GO:0061631">
    <property type="term" value="F:ubiquitin conjugating enzyme activity"/>
    <property type="evidence" value="ECO:0000314"/>
    <property type="project" value="ParkinsonsUK-UCL"/>
</dbReference>
<dbReference type="GO" id="GO:0071318">
    <property type="term" value="P:cellular response to ATP"/>
    <property type="evidence" value="ECO:0000314"/>
    <property type="project" value="ParkinsonsUK-UCL"/>
</dbReference>
<dbReference type="GO" id="GO:0034644">
    <property type="term" value="P:cellular response to UV"/>
    <property type="evidence" value="ECO:0000314"/>
    <property type="project" value="ParkinsonsUK-UCL"/>
</dbReference>
<dbReference type="GO" id="GO:0006974">
    <property type="term" value="P:DNA damage response"/>
    <property type="evidence" value="ECO:0000314"/>
    <property type="project" value="ParkinsonsUK-UCL"/>
</dbReference>
<dbReference type="GO" id="GO:0030901">
    <property type="term" value="P:midbrain development"/>
    <property type="evidence" value="ECO:0000316"/>
    <property type="project" value="ParkinsonsUK-UCL"/>
</dbReference>
<dbReference type="GO" id="GO:0042789">
    <property type="term" value="P:mRNA transcription by RNA polymerase II"/>
    <property type="evidence" value="ECO:0000314"/>
    <property type="project" value="ComplexPortal"/>
</dbReference>
<dbReference type="GO" id="GO:0010629">
    <property type="term" value="P:negative regulation of gene expression"/>
    <property type="evidence" value="ECO:0000315"/>
    <property type="project" value="ParkinsonsUK-UCL"/>
</dbReference>
<dbReference type="GO" id="GO:1905524">
    <property type="term" value="P:negative regulation of protein autoubiquitination"/>
    <property type="evidence" value="ECO:0000314"/>
    <property type="project" value="ParkinsonsUK-UCL"/>
</dbReference>
<dbReference type="GO" id="GO:1901797">
    <property type="term" value="P:negative regulation of signal transduction by p53 class mediator"/>
    <property type="evidence" value="ECO:0000314"/>
    <property type="project" value="ParkinsonsUK-UCL"/>
</dbReference>
<dbReference type="GO" id="GO:0000122">
    <property type="term" value="P:negative regulation of transcription by RNA polymerase II"/>
    <property type="evidence" value="ECO:0000315"/>
    <property type="project" value="ParkinsonsUK-UCL"/>
</dbReference>
<dbReference type="GO" id="GO:2000059">
    <property type="term" value="P:negative regulation of ubiquitin-dependent protein catabolic process"/>
    <property type="evidence" value="ECO:0000315"/>
    <property type="project" value="ParkinsonsUK-UCL"/>
</dbReference>
<dbReference type="GO" id="GO:0160207">
    <property type="term" value="P:positive regulation of androgen receptor signaling pathway"/>
    <property type="evidence" value="ECO:0000314"/>
    <property type="project" value="ParkinsonsUK-UCL"/>
</dbReference>
<dbReference type="GO" id="GO:0032436">
    <property type="term" value="P:positive regulation of proteasomal ubiquitin-dependent protein catabolic process"/>
    <property type="evidence" value="ECO:0000314"/>
    <property type="project" value="BHF-UCL"/>
</dbReference>
<dbReference type="GO" id="GO:0045944">
    <property type="term" value="P:positive regulation of transcription by RNA polymerase II"/>
    <property type="evidence" value="ECO:0000314"/>
    <property type="project" value="ParkinsonsUK-UCL"/>
</dbReference>
<dbReference type="GO" id="GO:0060261">
    <property type="term" value="P:positive regulation of transcription initiation by RNA polymerase II"/>
    <property type="evidence" value="ECO:0000314"/>
    <property type="project" value="ComplexPortal"/>
</dbReference>
<dbReference type="GO" id="GO:0046777">
    <property type="term" value="P:protein autophosphorylation"/>
    <property type="evidence" value="ECO:0000304"/>
    <property type="project" value="UniProtKB"/>
</dbReference>
<dbReference type="GO" id="GO:0000209">
    <property type="term" value="P:protein polyubiquitination"/>
    <property type="evidence" value="ECO:0000314"/>
    <property type="project" value="ParkinsonsUK-UCL"/>
</dbReference>
<dbReference type="GO" id="GO:0050821">
    <property type="term" value="P:protein stabilization"/>
    <property type="evidence" value="ECO:0000314"/>
    <property type="project" value="ParkinsonsUK-UCL"/>
</dbReference>
<dbReference type="GO" id="GO:1902806">
    <property type="term" value="P:regulation of cell cycle G1/S phase transition"/>
    <property type="evidence" value="ECO:0000304"/>
    <property type="project" value="ParkinsonsUK-UCL"/>
</dbReference>
<dbReference type="GO" id="GO:1901796">
    <property type="term" value="P:regulation of signal transduction by p53 class mediator"/>
    <property type="evidence" value="ECO:0000304"/>
    <property type="project" value="Reactome"/>
</dbReference>
<dbReference type="GO" id="GO:0051123">
    <property type="term" value="P:RNA polymerase II preinitiation complex assembly"/>
    <property type="evidence" value="ECO:0000353"/>
    <property type="project" value="ComplexPortal"/>
</dbReference>
<dbReference type="GO" id="GO:0006366">
    <property type="term" value="P:transcription by RNA polymerase II"/>
    <property type="evidence" value="ECO:0000316"/>
    <property type="project" value="BHF-UCL"/>
</dbReference>
<dbReference type="GO" id="GO:0006361">
    <property type="term" value="P:transcription initiation at RNA polymerase I promoter"/>
    <property type="evidence" value="ECO:0000316"/>
    <property type="project" value="ParkinsonsUK-UCL"/>
</dbReference>
<dbReference type="GO" id="GO:0006367">
    <property type="term" value="P:transcription initiation at RNA polymerase II promoter"/>
    <property type="evidence" value="ECO:0000314"/>
    <property type="project" value="BHF-UCL"/>
</dbReference>
<dbReference type="GO" id="GO:0006511">
    <property type="term" value="P:ubiquitin-dependent protein catabolic process"/>
    <property type="evidence" value="ECO:0000314"/>
    <property type="project" value="ParkinsonsUK-UCL"/>
</dbReference>
<dbReference type="CDD" id="cd05511">
    <property type="entry name" value="Bromo_TFIID"/>
    <property type="match status" value="2"/>
</dbReference>
<dbReference type="FunFam" id="1.10.1100.10:FF:000001">
    <property type="entry name" value="Transcription initiation factor TFIID subunit"/>
    <property type="match status" value="1"/>
</dbReference>
<dbReference type="FunFam" id="1.20.920.10:FF:000019">
    <property type="entry name" value="Transcription initiation factor TFIID subunit"/>
    <property type="match status" value="1"/>
</dbReference>
<dbReference type="FunFam" id="1.20.920.10:FF:000020">
    <property type="entry name" value="Transcription initiation factor TFIID subunit"/>
    <property type="match status" value="1"/>
</dbReference>
<dbReference type="Gene3D" id="1.20.920.10">
    <property type="entry name" value="Bromodomain-like"/>
    <property type="match status" value="2"/>
</dbReference>
<dbReference type="Gene3D" id="1.10.1100.10">
    <property type="entry name" value="TAFII-230 TBP-binding domain"/>
    <property type="match status" value="1"/>
</dbReference>
<dbReference type="IDEAL" id="IID00545"/>
<dbReference type="InterPro" id="IPR001487">
    <property type="entry name" value="Bromodomain"/>
</dbReference>
<dbReference type="InterPro" id="IPR036427">
    <property type="entry name" value="Bromodomain-like_sf"/>
</dbReference>
<dbReference type="InterPro" id="IPR018359">
    <property type="entry name" value="Bromodomain_CS"/>
</dbReference>
<dbReference type="InterPro" id="IPR040240">
    <property type="entry name" value="TAF1"/>
</dbReference>
<dbReference type="InterPro" id="IPR011177">
    <property type="entry name" value="TAF1_animal"/>
</dbReference>
<dbReference type="InterPro" id="IPR022591">
    <property type="entry name" value="TAF1_HAT_dom"/>
</dbReference>
<dbReference type="InterPro" id="IPR009067">
    <property type="entry name" value="TAF_II_230-bd"/>
</dbReference>
<dbReference type="InterPro" id="IPR036741">
    <property type="entry name" value="TAFII-230_TBP-bd_sf"/>
</dbReference>
<dbReference type="InterPro" id="IPR041670">
    <property type="entry name" value="Znf-CCHC_6"/>
</dbReference>
<dbReference type="PANTHER" id="PTHR13900">
    <property type="entry name" value="TRANSCRIPTION INITIATION FACTOR TFIID"/>
    <property type="match status" value="1"/>
</dbReference>
<dbReference type="PANTHER" id="PTHR13900:SF0">
    <property type="entry name" value="TRANSCRIPTION INITIATION FACTOR TFIID SUBUNIT 1"/>
    <property type="match status" value="1"/>
</dbReference>
<dbReference type="Pfam" id="PF00439">
    <property type="entry name" value="Bromodomain"/>
    <property type="match status" value="2"/>
</dbReference>
<dbReference type="Pfam" id="PF12157">
    <property type="entry name" value="DUF3591"/>
    <property type="match status" value="1"/>
</dbReference>
<dbReference type="Pfam" id="PF09247">
    <property type="entry name" value="TBP-binding"/>
    <property type="match status" value="1"/>
</dbReference>
<dbReference type="Pfam" id="PF15288">
    <property type="entry name" value="zf-CCHC_6"/>
    <property type="match status" value="1"/>
</dbReference>
<dbReference type="PIRSF" id="PIRSF003047">
    <property type="entry name" value="TAF1_animal"/>
    <property type="match status" value="1"/>
</dbReference>
<dbReference type="PRINTS" id="PR00503">
    <property type="entry name" value="BROMODOMAIN"/>
</dbReference>
<dbReference type="SMART" id="SM00297">
    <property type="entry name" value="BROMO"/>
    <property type="match status" value="2"/>
</dbReference>
<dbReference type="SUPFAM" id="SSF47370">
    <property type="entry name" value="Bromodomain"/>
    <property type="match status" value="2"/>
</dbReference>
<dbReference type="SUPFAM" id="SSF47055">
    <property type="entry name" value="TAF(II)230 TBP-binding fragment"/>
    <property type="match status" value="1"/>
</dbReference>
<dbReference type="PROSITE" id="PS00633">
    <property type="entry name" value="BROMODOMAIN_1"/>
    <property type="match status" value="2"/>
</dbReference>
<dbReference type="PROSITE" id="PS50014">
    <property type="entry name" value="BROMODOMAIN_2"/>
    <property type="match status" value="2"/>
</dbReference>
<keyword id="KW-0002">3D-structure</keyword>
<keyword id="KW-0007">Acetylation</keyword>
<keyword id="KW-0012">Acyltransferase</keyword>
<keyword id="KW-0024">Alternative initiation</keyword>
<keyword id="KW-0025">Alternative splicing</keyword>
<keyword id="KW-0067">ATP-binding</keyword>
<keyword id="KW-0103">Bromodomain</keyword>
<keyword id="KW-0131">Cell cycle</keyword>
<keyword id="KW-0225">Disease variant</keyword>
<keyword id="KW-0238">DNA-binding</keyword>
<keyword id="KW-1023">Dystonia</keyword>
<keyword id="KW-0945">Host-virus interaction</keyword>
<keyword id="KW-0991">Intellectual disability</keyword>
<keyword id="KW-1017">Isopeptide bond</keyword>
<keyword id="KW-0418">Kinase</keyword>
<keyword id="KW-0547">Nucleotide-binding</keyword>
<keyword id="KW-0539">Nucleus</keyword>
<keyword id="KW-0908">Parkinsonism</keyword>
<keyword id="KW-0597">Phosphoprotein</keyword>
<keyword id="KW-1267">Proteomics identification</keyword>
<keyword id="KW-1185">Reference proteome</keyword>
<keyword id="KW-0677">Repeat</keyword>
<keyword id="KW-0723">Serine/threonine-protein kinase</keyword>
<keyword id="KW-0804">Transcription</keyword>
<keyword id="KW-0805">Transcription regulation</keyword>
<keyword id="KW-0808">Transferase</keyword>
<keyword id="KW-0832">Ubl conjugation</keyword>
<sequence>MGPGCDLLLRTAATITAAAIMSDTDSDEDSAGGGPFSLAGFLFGNINGAGQLEGESVLDDECKKHLAGLGALGLGSLITELTANEELTGTDGALVNDEGWVRSTEDAVDYSDINEVAEDESRRYQQTMGSLQPLCHSDYDEDDYDADCEDIDCKLMPPPPPPPGPMKKDKDQDSITGVSENGEGIILPSIIAPSSLASEKVDFSSSSDSESEMGPQEATQAESEDGKLTLPLAGIMQHDATKLLPSVTELFPEFRPGKVLRFLRLFGPGKNVPSVWRSARRKRKKKHRELIQEEQIQEVECSVESEVSQKSLWNYDYAPPPPPEQCLSDDEITMMAPVESKFSQSTGDIDKVTDTKPRVAEWRYGPARLWYDMLGVPEDGSGFDYGFKLRKTEHEPVIKSRMIEEFRKLEENNGTDLLADENFLMVTQLHWEDDIIWDGEDVKHKGTKPQRASLAGWLPSSMTRNAMAYNVQQGFAATLDDDKPWYSIFPIDNEDLVYGRWEDNIIWDAQAMPRLLEPPVLTLDPNDENLILEIPDEKEEATSNSPSKESKKESSLKKSRILLGKTGVIKEEPQQNMSQPEVKDPWNLSNDEYYYPKQQGLRGTFGGNIIQHSIPAVELRQPFFPTHMGPIKLRQFHRPPLKKYSFGALSQPGPHSVQPLLKHIKKKAKMREQERQASGGGEMFFMRTPQDLTGKDGDLILAEYSEENGPLMMQVGMATKIKNYYKRKPGKDPGAPDCKYGETVYCHTSPFLGSLHPGQLLQAFENNLFRAPIYLHKMPETDFLIIRTRQGYYIRELVDIFVVGQQCPLFEVPGPNSKRANTHIRDFLQVFIYRLFWKSKDRPRRIRMEDIKKAFPSHSESSIRKRLKLCADFKRTGMDSNWWVLKSDFRLPTEEEIRAMVSPEQCCAYYSMIAAEQRLKDAGYGEKSFFAPEEENEEDFQMKIDDEVRTAPWNTTRAFIAAMKGKCLLEVTGVADPTGCGEGFSYVKIPNKPTQQKDDKEPQPVKKTVTGTDADLRRLSLKNAKQLLRKFGVPEEEIKKLSRWEVIDVVRTMSTEQARSGEGPMSKFARGSRFSVAEHQERYKEECQRIFDLQNKVLSSTEVLSTDTDSSSAEDSDFEEMGKNIENMLQNKKTSSQLSREREEQERKELQRMLLAAGSAASGNNHRDDDTASVTSLNSSATGRCLKIYRTFRDEEGKEYVRCETVRKPAVIDAYVRIRTTKDEEFIRKFALFDEQHREEMRKERRRIQEQLRRLKRNQEKEKLKGPPEKKPKKMKERPDLKLKCGACGAIGHMRTNKFCPLYYQTNAPPSNPVAMTEEQEEELEKTVIHNDNEELIKVEGTKIVLGKQLIESADEVRRKSLVLKFPKQQLPPKKKRRVGTTVHCDYLNRPHKSIHRRRTDPMVTLSSILESIINDMRDLPNTYPFHTPVNAKVVKDYYKIITRPMDLQTLRENVRKRLYPSREEFREHLELIVKNSATYNGPKHSLTQISQSMLDLCDEKLKEKEDKLARLEKAINPLLDDDDQVAFSFILDNIVTQKMMAVPDSWPFHHPVNKKFVPDYYKVIVNPMDLETIRKNISKHKYQSRESFLDDVNLILANSVKYNGPESQYTKTAQEIVNVCYQTLTEYDEHLTQLEKDICTAKEAALEEAELESLDPMTPGPYTPQPPDLYDTNTSLSMSRDASVFQDESNMSVLDIPSATPEKQVTQEGEDGDGDLADEEEGTVQQPQASVLYEDLLMSEGEDDEEDAGSDEEGDNPFSAIQLSESGSDSDVGSGGIRPKQPRMLQENTRMDMENEESMMSYEGDGGEASHGLEDSNISYGSYEEPDPKSNTQDTSFSSIGGYEVSEEEEDEEEEEQRSGPSVLSQVHLSEDEEDSEDFHSIAGDSDLDSDE</sequence>
<evidence type="ECO:0000250" key="1">
    <source>
        <dbReference type="UniProtKB" id="Q80UV9"/>
    </source>
</evidence>
<evidence type="ECO:0000255" key="2"/>
<evidence type="ECO:0000255" key="3">
    <source>
        <dbReference type="PROSITE-ProRule" id="PRU00035"/>
    </source>
</evidence>
<evidence type="ECO:0000256" key="4">
    <source>
        <dbReference type="SAM" id="MobiDB-lite"/>
    </source>
</evidence>
<evidence type="ECO:0000269" key="5">
    <source>
    </source>
</evidence>
<evidence type="ECO:0000269" key="6">
    <source>
    </source>
</evidence>
<evidence type="ECO:0000269" key="7">
    <source>
    </source>
</evidence>
<evidence type="ECO:0000269" key="8">
    <source>
    </source>
</evidence>
<evidence type="ECO:0000269" key="9">
    <source>
    </source>
</evidence>
<evidence type="ECO:0000269" key="10">
    <source>
    </source>
</evidence>
<evidence type="ECO:0000269" key="11">
    <source>
    </source>
</evidence>
<evidence type="ECO:0000269" key="12">
    <source>
    </source>
</evidence>
<evidence type="ECO:0000269" key="13">
    <source>
    </source>
</evidence>
<evidence type="ECO:0000269" key="14">
    <source>
    </source>
</evidence>
<evidence type="ECO:0000269" key="15">
    <source>
    </source>
</evidence>
<evidence type="ECO:0000269" key="16">
    <source>
    </source>
</evidence>
<evidence type="ECO:0000269" key="17">
    <source>
    </source>
</evidence>
<evidence type="ECO:0000269" key="18">
    <source>
    </source>
</evidence>
<evidence type="ECO:0000269" key="19">
    <source>
    </source>
</evidence>
<evidence type="ECO:0000269" key="20">
    <source>
    </source>
</evidence>
<evidence type="ECO:0000269" key="21">
    <source>
    </source>
</evidence>
<evidence type="ECO:0000269" key="22">
    <source>
    </source>
</evidence>
<evidence type="ECO:0000269" key="23">
    <source>
    </source>
</evidence>
<evidence type="ECO:0000269" key="24">
    <source>
    </source>
</evidence>
<evidence type="ECO:0000269" key="25">
    <source>
    </source>
</evidence>
<evidence type="ECO:0000269" key="26">
    <source>
    </source>
</evidence>
<evidence type="ECO:0000269" key="27">
    <source>
    </source>
</evidence>
<evidence type="ECO:0000269" key="28">
    <source>
    </source>
</evidence>
<evidence type="ECO:0000269" key="29">
    <source>
    </source>
</evidence>
<evidence type="ECO:0000269" key="30">
    <source>
    </source>
</evidence>
<evidence type="ECO:0000269" key="31">
    <source>
    </source>
</evidence>
<evidence type="ECO:0000269" key="32">
    <source>
    </source>
</evidence>
<evidence type="ECO:0000269" key="33">
    <source ref="4"/>
</evidence>
<evidence type="ECO:0000303" key="34">
    <source>
    </source>
</evidence>
<evidence type="ECO:0000303" key="35">
    <source>
    </source>
</evidence>
<evidence type="ECO:0000303" key="36">
    <source>
    </source>
</evidence>
<evidence type="ECO:0000303" key="37">
    <source ref="7"/>
</evidence>
<evidence type="ECO:0000305" key="38"/>
<evidence type="ECO:0000305" key="39">
    <source>
    </source>
</evidence>
<evidence type="ECO:0000312" key="40">
    <source>
        <dbReference type="HGNC" id="HGNC:11535"/>
    </source>
</evidence>
<evidence type="ECO:0007744" key="41">
    <source>
        <dbReference type="PDB" id="6FIC"/>
    </source>
</evidence>
<evidence type="ECO:0007744" key="42">
    <source>
        <dbReference type="PDB" id="6P39"/>
    </source>
</evidence>
<evidence type="ECO:0007744" key="43">
    <source>
        <dbReference type="PDB" id="6P3A"/>
    </source>
</evidence>
<evidence type="ECO:0007744" key="44">
    <source>
        <dbReference type="PDB" id="7EDX"/>
    </source>
</evidence>
<evidence type="ECO:0007744" key="45">
    <source>
        <dbReference type="PDB" id="7EG7"/>
    </source>
</evidence>
<evidence type="ECO:0007744" key="46">
    <source>
        <dbReference type="PDB" id="7EG8"/>
    </source>
</evidence>
<evidence type="ECO:0007744" key="47">
    <source>
        <dbReference type="PDB" id="7EG9"/>
    </source>
</evidence>
<evidence type="ECO:0007744" key="48">
    <source>
        <dbReference type="PDB" id="7EGA"/>
    </source>
</evidence>
<evidence type="ECO:0007744" key="49">
    <source>
        <dbReference type="PDB" id="7EGB"/>
    </source>
</evidence>
<evidence type="ECO:0007744" key="50">
    <source>
        <dbReference type="PDB" id="7EGC"/>
    </source>
</evidence>
<evidence type="ECO:0007744" key="51">
    <source>
        <dbReference type="PDB" id="7EGD"/>
    </source>
</evidence>
<evidence type="ECO:0007744" key="52">
    <source>
        <dbReference type="PDB" id="7EGE"/>
    </source>
</evidence>
<evidence type="ECO:0007744" key="53">
    <source>
        <dbReference type="PDB" id="7EGH"/>
    </source>
</evidence>
<evidence type="ECO:0007744" key="54">
    <source>
        <dbReference type="PDB" id="7EGI"/>
    </source>
</evidence>
<evidence type="ECO:0007744" key="55">
    <source>
        <dbReference type="PDB" id="7EGJ"/>
    </source>
</evidence>
<evidence type="ECO:0007744" key="56">
    <source>
        <dbReference type="PDB" id="7JJG"/>
    </source>
</evidence>
<evidence type="ECO:0007744" key="57">
    <source>
        <dbReference type="PDB" id="7JJH"/>
    </source>
</evidence>
<evidence type="ECO:0007744" key="58">
    <source>
        <dbReference type="PDB" id="7JSP"/>
    </source>
</evidence>
<evidence type="ECO:0007744" key="59">
    <source>
        <dbReference type="PDB" id="7JTC"/>
    </source>
</evidence>
<evidence type="ECO:0007744" key="60">
    <source>
        <dbReference type="PDB" id="7K03"/>
    </source>
</evidence>
<evidence type="ECO:0007744" key="61">
    <source>
        <dbReference type="PDB" id="7K0D"/>
    </source>
</evidence>
<evidence type="ECO:0007744" key="62">
    <source>
        <dbReference type="PDB" id="7K0U"/>
    </source>
</evidence>
<evidence type="ECO:0007744" key="63">
    <source>
        <dbReference type="PDB" id="7K1P"/>
    </source>
</evidence>
<evidence type="ECO:0007744" key="64">
    <source>
        <dbReference type="PDB" id="7K27"/>
    </source>
</evidence>
<evidence type="ECO:0007744" key="65">
    <source>
        <dbReference type="PDB" id="7K3O"/>
    </source>
</evidence>
<evidence type="ECO:0007744" key="66">
    <source>
        <dbReference type="PDB" id="7K42"/>
    </source>
</evidence>
<evidence type="ECO:0007744" key="67">
    <source>
        <dbReference type="PDB" id="7K6F"/>
    </source>
</evidence>
<evidence type="ECO:0007744" key="68">
    <source>
        <dbReference type="PDB" id="7L6X"/>
    </source>
</evidence>
<evidence type="ECO:0007744" key="69">
    <source>
        <dbReference type="PDB" id="7LB0"/>
    </source>
</evidence>
<evidence type="ECO:0007744" key="70">
    <source>
        <dbReference type="PDB" id="7LB1"/>
    </source>
</evidence>
<evidence type="ECO:0007744" key="71">
    <source>
        <dbReference type="PDB" id="7LB2"/>
    </source>
</evidence>
<evidence type="ECO:0007744" key="72">
    <source>
        <dbReference type="PDB" id="7N42"/>
    </source>
</evidence>
<evidence type="ECO:0007744" key="73">
    <source>
    </source>
</evidence>
<evidence type="ECO:0007744" key="74">
    <source>
    </source>
</evidence>
<evidence type="ECO:0007744" key="75">
    <source>
    </source>
</evidence>
<evidence type="ECO:0007744" key="76">
    <source>
    </source>
</evidence>
<evidence type="ECO:0007829" key="77">
    <source>
        <dbReference type="PDB" id="3AAD"/>
    </source>
</evidence>
<evidence type="ECO:0007829" key="78">
    <source>
        <dbReference type="PDB" id="4RGW"/>
    </source>
</evidence>
<evidence type="ECO:0007829" key="79">
    <source>
        <dbReference type="PDB" id="5I29"/>
    </source>
</evidence>
<evidence type="ECO:0007829" key="80">
    <source>
        <dbReference type="PDB" id="6P3A"/>
    </source>
</evidence>
<evidence type="ECO:0007829" key="81">
    <source>
        <dbReference type="PDB" id="7EGH"/>
    </source>
</evidence>
<evidence type="ECO:0007829" key="82">
    <source>
        <dbReference type="PDB" id="7K6F"/>
    </source>
</evidence>
<evidence type="ECO:0007829" key="83">
    <source>
        <dbReference type="PDB" id="7LB1"/>
    </source>
</evidence>
<comment type="function">
    <text evidence="6 11 12 16 19 24 25 27 28 31 32">The TFIID basal transcription factor complex plays a major role in the initiation of RNA polymerase II (Pol II)-dependent transcription (PubMed:33795473). TFIID recognizes and binds promoters with or without a TATA box via its subunit TBP, a TATA-box-binding protein, and promotes assembly of the pre-initiation complex (PIC) (PubMed:33795473). The TFIID complex consists of TBP and TBP-associated factors (TAFs), including TAF1, TAF2, TAF3, TAF4, TAF5, TAF6, TAF7, TAF8, TAF9, TAF10, TAF11, TAF12 and TAF13 (PubMed:33795473). TAF1 is the largest component and core scaffold of the TFIID complex, involved in nucleating complex assembly (PubMed:25412659, PubMed:27007846, PubMed:33795473). TAF1 forms a promoter DNA binding subcomplex of TFIID, together with TAF7 and TAF2 (PubMed:33795473). Contains novel N- and C-terminal Ser/Thr kinase domains which can autophosphorylate or transphosphorylate other transcription factors (PubMed:25412659, PubMed:8625415). Phosphorylates TP53 on 'Thr-55' which leads to MDM2-mediated degradation of TP53 (PubMed:25412659). Phosphorylates GTF2A1 and GTF2F1 on Ser residues (PubMed:25412659). Possesses DNA-binding activity (PubMed:25412659). Essential for progression of the G1 phase of the cell cycle (PubMed:11278496, PubMed:15053879, PubMed:2038334, PubMed:8450888, PubMed:8625415, PubMed:9660973, PubMed:9858607). Exhibits histone acetyltransferase activity towards histones H3 and H4 (PubMed:15870300).</text>
</comment>
<comment type="catalytic activity">
    <reaction>
        <text>L-seryl-[protein] + ATP = O-phospho-L-seryl-[protein] + ADP + H(+)</text>
        <dbReference type="Rhea" id="RHEA:17989"/>
        <dbReference type="Rhea" id="RHEA-COMP:9863"/>
        <dbReference type="Rhea" id="RHEA-COMP:11604"/>
        <dbReference type="ChEBI" id="CHEBI:15378"/>
        <dbReference type="ChEBI" id="CHEBI:29999"/>
        <dbReference type="ChEBI" id="CHEBI:30616"/>
        <dbReference type="ChEBI" id="CHEBI:83421"/>
        <dbReference type="ChEBI" id="CHEBI:456216"/>
        <dbReference type="EC" id="2.7.11.1"/>
    </reaction>
</comment>
<comment type="catalytic activity">
    <reaction>
        <text>L-threonyl-[protein] + ATP = O-phospho-L-threonyl-[protein] + ADP + H(+)</text>
        <dbReference type="Rhea" id="RHEA:46608"/>
        <dbReference type="Rhea" id="RHEA-COMP:11060"/>
        <dbReference type="Rhea" id="RHEA-COMP:11605"/>
        <dbReference type="ChEBI" id="CHEBI:15378"/>
        <dbReference type="ChEBI" id="CHEBI:30013"/>
        <dbReference type="ChEBI" id="CHEBI:30616"/>
        <dbReference type="ChEBI" id="CHEBI:61977"/>
        <dbReference type="ChEBI" id="CHEBI:456216"/>
        <dbReference type="EC" id="2.7.11.1"/>
    </reaction>
</comment>
<comment type="catalytic activity">
    <reaction evidence="12">
        <text>L-lysyl-[protein] + acetyl-CoA = N(6)-acetyl-L-lysyl-[protein] + CoA + H(+)</text>
        <dbReference type="Rhea" id="RHEA:45948"/>
        <dbReference type="Rhea" id="RHEA-COMP:9752"/>
        <dbReference type="Rhea" id="RHEA-COMP:10731"/>
        <dbReference type="ChEBI" id="CHEBI:15378"/>
        <dbReference type="ChEBI" id="CHEBI:29969"/>
        <dbReference type="ChEBI" id="CHEBI:57287"/>
        <dbReference type="ChEBI" id="CHEBI:57288"/>
        <dbReference type="ChEBI" id="CHEBI:61930"/>
        <dbReference type="EC" id="2.3.1.48"/>
    </reaction>
</comment>
<comment type="cofactor">
    <cofactor>
        <name>Mg(2+)</name>
        <dbReference type="ChEBI" id="CHEBI:18420"/>
    </cofactor>
</comment>
<comment type="activity regulation">
    <text evidence="7 18 28 32">Autophosphorylates on Ser residues (PubMed:8625415). Inhibited by retinoblastoma tumor suppressor protein, RB1 (PubMed:9858607). Binding to TAF7 or CIITA inhibits the histone acetyltransferase activity (PubMed:11592977, PubMed:22711989).</text>
</comment>
<comment type="subunit">
    <text evidence="5 7 8 9 11 13 17 19 24 25 26 32">Component of the TFIID basal transcription factor complex, composed of TATA-box-binding protein TBP, and a number of TBP-associated factors (TAFs), including TAF1, TAF2, TAF3, TAF4, TAF5, TAF6, TAF7, TAF8, TAF9, TAF10, TAF11, TAF12 and TAF13 (PubMed:33795473, PubMed:7680771). Interacts with TAF7; the interaction is direct (PubMed:11592977, PubMed:25412659). TAF1, when part of the TFIID complex, interacts with C-terminus of TP53 (PubMed:15053879). Part of a TFIID-containing RNA polymerase II pre-initiation complex that is composed of TBP and at least GTF2A1, GTF2A2, GTF2E1, GTF2E2, GTF2F1, GTF2H2, GTF2H3, GTF2H4, GTF2H5, GTF2B, TCEA1, ERCC2, ERCC3, TAF1, TAF2, TAF3, TAF4, TAF5, TAF6, TAF7, TAF8, TAF9, TAF10, TAF11, TAF12 and TAF13 (PubMed:27007846). Component of some MLL1/MLL complex, at least composed of the core components KMT2A/MLL1, ASH2L, HCFC1/HCF1, WDR5 and RBBP5, as well as the facultative components BACC1, CHD8, E2F6, HSP70, INO80C, KANSL1, LAS1L, MAX, MCRS1, MGA, KAT8/MOF, PELP1, PHF20, PRP31, RING2, RUVB1/TIP49A, RUVB2/TIP49B, SENP3, TAF1, TAF4, TAF6, TAF7, TAF9 and TEX10 (PubMed:15960975). RB1 interacts with the N-terminal domain of TAF1 (PubMed:9858607). Interacts with ASF1A and ASF1B (PubMed:10759893, PubMed:12093919, PubMed:12842904). Interacts (via bromo domains) with acetylated lysine residues on the N-terminus of histone H1.4, H2A, H2B, H3 and H4 (in vitro) (PubMed:22464331).</text>
</comment>
<comment type="subunit">
    <text evidence="29">(Microbial infection) Interacts with SV40 Large T antigen.</text>
</comment>
<comment type="subunit">
    <text evidence="30">(Microbial infection) Interacts with herpes simplex virus 1 ICP4.</text>
</comment>
<comment type="interaction">
    <interactant intactId="EBI-491289">
        <id>P21675</id>
    </interactant>
    <interactant intactId="EBI-457886">
        <id>P35269</id>
        <label>GTF2F1</label>
    </interactant>
    <organismsDiffer>false</organismsDiffer>
    <experiments>3</experiments>
</comment>
<comment type="interaction">
    <interactant intactId="EBI-491289">
        <id>P21675</id>
    </interactant>
    <interactant intactId="EBI-355371">
        <id>P20226</id>
        <label>TBP</label>
    </interactant>
    <organismsDiffer>false</organismsDiffer>
    <experiments>11</experiments>
</comment>
<comment type="interaction">
    <interactant intactId="EBI-491289">
        <id>P21675</id>
    </interactant>
    <interactant intactId="EBI-2603114">
        <id>P03255</id>
    </interactant>
    <organismsDiffer>true</organismsDiffer>
    <experiments>3</experiments>
</comment>
<comment type="subcellular location">
    <subcellularLocation>
        <location evidence="16 20 24">Nucleus</location>
    </subcellularLocation>
</comment>
<comment type="alternative products">
    <event type="alternative splicing"/>
    <event type="alternative initiation"/>
    <isoform>
        <id>P21675-2</id>
        <name>2</name>
        <sequence type="displayed"/>
    </isoform>
    <isoform>
        <id>P21675-1</id>
        <name>1</name>
        <sequence type="described" ref="VSP_061988"/>
    </isoform>
    <isoform>
        <id>P21675-13</id>
        <name>13</name>
        <sequence type="described" ref="VSP_061987 VSP_061988"/>
    </isoform>
    <isoform>
        <id>P21675-14</id>
        <name>14</name>
        <sequence type="described" ref="VSP_061987"/>
    </isoform>
    <isoform>
        <id>P21675-15</id>
        <name>15</name>
        <sequence type="described" ref="VSP_061999 VSP_062000"/>
    </isoform>
    <isoform>
        <id>P21675-16</id>
        <name>16</name>
        <sequence type="described" ref="VSP_061996 VSP_061998"/>
    </isoform>
    <isoform>
        <id>P21675-17</id>
        <name>N-TAF1</name>
        <name>TA14-391</name>
        <sequence type="described" ref="VSP_061995"/>
    </isoform>
    <isoform>
        <id>P21675-18</id>
        <name>2a</name>
        <sequence type="described" ref="VSP_061997 VSP_061998"/>
    </isoform>
    <isoform>
        <id>P21675-19</id>
        <name>2c</name>
        <sequence type="described" ref="VSP_061998"/>
    </isoform>
    <isoform>
        <id>P21675-20</id>
        <name>2d</name>
        <sequence type="described" ref="VSP_061995 VSP_061998"/>
    </isoform>
    <isoform>
        <id>P21675-21</id>
        <name>2e</name>
        <sequence type="described" ref="VSP_061993 VSP_061994"/>
    </isoform>
    <isoform>
        <id>P21675-22</id>
        <name>2g</name>
        <sequence type="described" ref="VSP_061995 VSP_061997 VSP_061998"/>
    </isoform>
    <isoform>
        <id>P21675-23</id>
        <name>2h</name>
        <sequence type="described" ref="VSP_061990 VSP_061991"/>
    </isoform>
    <isoform>
        <id>P21675-24</id>
        <name>2i</name>
        <sequence type="described" ref="VSP_061989 VSP_061992"/>
    </isoform>
    <isoform>
        <id>P21675-25</id>
        <name>4</name>
        <sequence type="described" ref="VSP_061997"/>
    </isoform>
    <text evidence="39">the TAF1/DYT3 multiple transcript system is composed of 38 evolutionary conserved exons plus 5 downstream exons referred to as exons d1-d5 that are primate-specific. Multiple highly polymorphic variants can be generated by splicing exons d3 and d4 to various combinations of exons 1-37.</text>
</comment>
<comment type="domain">
    <text evidence="17 22">The Bromo domain mediates interaction with histones that have acetylated lysine residues at specific positions (PubMed:22464331). The second domain also recognizes and binds histones that are butyrylated and crotonylated (PubMed:26365797).</text>
</comment>
<comment type="PTM">
    <text evidence="28">Phosphorylated by casein kinase II in vitro.</text>
</comment>
<comment type="disease" evidence="10 14">
    <disease id="DI-00414">
        <name>Dystonia 3, torsion, X-linked</name>
        <acronym>DYT3</acronym>
        <description>An X-linked dystonia-parkinsonism disorder. Dystonia is defined by the presence of sustained involuntary muscle contractions, often leading to abnormal postures. DYT3 is characterized by severe progressive torsion dystonia followed by parkinsonism. It has a well-defined pathology of extensive neuronal loss and mosaic gliosis in the striatum (caudate nucleus and putamen) which appears to resemble that in Huntington disease.</description>
        <dbReference type="MIM" id="314250"/>
    </disease>
    <text>The disease is caused by variants affecting the gene represented in this entry.</text>
</comment>
<comment type="disease" evidence="23">
    <disease id="DI-04617">
        <name>Intellectual developmental disorder, X-linked, syndromic 33</name>
        <acronym>MRXS33</acronym>
        <description>A syndrome characterized by intellectual deficit, delayed psychomotor development, delayed speech and language, and characteristic facial features.</description>
        <dbReference type="MIM" id="300966"/>
    </disease>
    <text>The disease is caused by variants affecting the gene represented in this entry.</text>
</comment>
<comment type="miscellaneous">
    <molecule>Isoform 16</molecule>
    <text evidence="38">May be produced at very low levels due to a premature stop CC codon in the mRNA, leading to nonsense-mediated mRNA decay.</text>
</comment>
<comment type="miscellaneous">
    <molecule>Isoform 2a</molecule>
    <text evidence="38 39">May be produced at very low levels due to a premature stop CC codon in the mRNA, leading to nonsense-mediated mRNA decay (Probable). Includes a downstream (d) exon and is preferentially expressed in brain (Probable). May play a role in the regulation of genes involved in dopamine processing and transport (Probable).</text>
</comment>
<comment type="miscellaneous">
    <molecule>Isoform 2c</molecule>
    <text evidence="38 39">May be produced at very low levels due to a premature stop CC codon in the mRNA, leading to nonsense-mediated mRNA decay (Probable). Includes a downstream (d) exon and is preferentially expressed in brain (Probable). May play a role in the regulation of genes involved in dopamine processing and transport (Probable).</text>
</comment>
<comment type="miscellaneous">
    <molecule>Isoform 2d</molecule>
    <text evidence="38 39">May be produced at very low levels due to a premature stop CC codon in the mRNA, leading to nonsense-mediated mRNA decay (Probable). Includes a downstream (d) exon and is preferentially expressed in brain (Probable). May play a role in the regulation of genes involved in dopamine processing and transport (Probable).</text>
</comment>
<comment type="miscellaneous">
    <molecule>Isoform 2e</molecule>
    <text evidence="38 39">May be produced at very low levels due to a premature stop CC codon in the mRNA, leading to nonsense-mediated mRNA decay (Probable). Includes a downstream (d) exon and is preferentially expressed in brain (Probable). May play a role in the regulation of genes involved in dopamine processing and transport (Probable).</text>
</comment>
<comment type="miscellaneous">
    <molecule>Isoform 2h</molecule>
    <text evidence="38 39">May be produced at very low levels due to a premature stop CC codon in the mRNA, leading to nonsense-mediated mRNA decay (Probable). Includes a downstream (d) exon and is preferentially expressed in brain (Probable). May play a role in the regulation of genes involved in dopamine processing and transport (Probable).</text>
</comment>
<comment type="miscellaneous">
    <molecule>Isoform 2i</molecule>
    <text evidence="38 39">May be produced at very low levels due to a premature stop CC codon in the mRNA, leading to nonsense-mediated mRNA decay (Probable). Includes a downstream (d) exon and is preferentially expressed in brain (Probable). May play a role in the regulation of genes involved in dopamine processing and transport (Probable).</text>
</comment>
<comment type="miscellaneous">
    <molecule>Isoform 2g</molecule>
    <text evidence="39">Includes a downstream (d) exon and is preferentially expressed in brain (Probable). May play a role in the regulation of genes involved in dopamine processing and transport (Probable).</text>
</comment>
<comment type="miscellaneous">
    <molecule>Isoform 15</molecule>
    <text evidence="38">May be produced at very low levels due to a premature stop CC codon in the mRNA, leading to nonsense-mediated mRNA decay.</text>
</comment>
<comment type="miscellaneous">
    <molecule>Isoform N-TAF1</molecule>
    <text evidence="38">Only detected in brain, highest expression in the caudate nucleus.</text>
</comment>
<comment type="similarity">
    <text evidence="38">Belongs to the TAF1 family.</text>
</comment>
<comment type="sequence caution" evidence="38">
    <conflict type="miscellaneous discrepancy">
        <sequence resource="EMBL-CDS" id="CAA30073"/>
    </conflict>
    <text>Contaminating sequence. Sequence of unknown origin in the N-terminal and C-terminal part.</text>
</comment>
<organism>
    <name type="scientific">Homo sapiens</name>
    <name type="common">Human</name>
    <dbReference type="NCBI Taxonomy" id="9606"/>
    <lineage>
        <taxon>Eukaryota</taxon>
        <taxon>Metazoa</taxon>
        <taxon>Chordata</taxon>
        <taxon>Craniata</taxon>
        <taxon>Vertebrata</taxon>
        <taxon>Euteleostomi</taxon>
        <taxon>Mammalia</taxon>
        <taxon>Eutheria</taxon>
        <taxon>Euarchontoglires</taxon>
        <taxon>Primates</taxon>
        <taxon>Haplorrhini</taxon>
        <taxon>Catarrhini</taxon>
        <taxon>Hominidae</taxon>
        <taxon>Homo</taxon>
    </lineage>
</organism>
<proteinExistence type="evidence at protein level"/>